<comment type="function">
    <text evidence="3 4">Transcriptional corepressor. Acts as a dominant repressor towards other family members. Inhibits NF-kappa-B-regulated gene expression. May be required for the initiation and maintenance of the differentiated state. Essential for the transcriptional repressor activity of SIX3 during retina and lens development.</text>
</comment>
<comment type="subunit">
    <text evidence="1 3 5 6">Homooligomer and heterooligomer with other family members. Binds TCF7 (By similarity). Binds the NF-kappa-B subunit RELA. Interacts with PHF12. Interacts (via Q domain) with SIX3. Interacts with SIX6.</text>
</comment>
<comment type="interaction">
    <interactant intactId="EBI-717810">
        <id>Q08117</id>
    </interactant>
    <interactant intactId="EBI-743598">
        <id>Q9NYB9</id>
        <label>ABI2</label>
    </interactant>
    <organismsDiffer>false</organismsDiffer>
    <experiments>5</experiments>
</comment>
<comment type="interaction">
    <interactant intactId="EBI-717810">
        <id>Q08117</id>
    </interactant>
    <interactant intactId="EBI-8637627">
        <id>Q8WTP8</id>
        <label>AEN</label>
    </interactant>
    <organismsDiffer>false</organismsDiffer>
    <experiments>3</experiments>
</comment>
<comment type="interaction">
    <interactant intactId="EBI-717810">
        <id>Q08117</id>
    </interactant>
    <interactant intactId="EBI-8643161">
        <id>Q9NX04</id>
        <label>AIRIM</label>
    </interactant>
    <organismsDiffer>false</organismsDiffer>
    <experiments>3</experiments>
</comment>
<comment type="interaction">
    <interactant intactId="EBI-717810">
        <id>Q08117</id>
    </interactant>
    <interactant intactId="EBI-308663">
        <id>A7KAX9</id>
        <label>ARHGAP32</label>
    </interactant>
    <organismsDiffer>false</organismsDiffer>
    <experiments>3</experiments>
</comment>
<comment type="interaction">
    <interactant intactId="EBI-717810">
        <id>Q08117</id>
    </interactant>
    <interactant intactId="EBI-930964">
        <id>P54253</id>
        <label>ATXN1</label>
    </interactant>
    <organismsDiffer>false</organismsDiffer>
    <experiments>3</experiments>
</comment>
<comment type="interaction">
    <interactant intactId="EBI-717810">
        <id>Q08117</id>
    </interactant>
    <interactant intactId="EBI-742750">
        <id>Q8TBE0</id>
        <label>BAHD1</label>
    </interactant>
    <organismsDiffer>false</organismsDiffer>
    <experiments>3</experiments>
</comment>
<comment type="interaction">
    <interactant intactId="EBI-717810">
        <id>Q08117</id>
    </interactant>
    <interactant intactId="EBI-765407">
        <id>P41182</id>
        <label>BCL6</label>
    </interactant>
    <organismsDiffer>false</organismsDiffer>
    <experiments>3</experiments>
</comment>
<comment type="interaction">
    <interactant intactId="EBI-717810">
        <id>Q08117</id>
    </interactant>
    <interactant intactId="EBI-711810">
        <id>O14503</id>
        <label>BHLHE40</label>
    </interactant>
    <organismsDiffer>false</organismsDiffer>
    <experiments>3</experiments>
</comment>
<comment type="interaction">
    <interactant intactId="EBI-717810">
        <id>Q08117</id>
    </interactant>
    <interactant intactId="EBI-517623">
        <id>Q96CA5</id>
        <label>BIRC7</label>
    </interactant>
    <organismsDiffer>false</organismsDiffer>
    <experiments>4</experiments>
</comment>
<comment type="interaction">
    <interactant intactId="EBI-717810">
        <id>Q08117</id>
    </interactant>
    <interactant intactId="EBI-358049">
        <id>Q13895</id>
        <label>BYSL</label>
    </interactant>
    <organismsDiffer>false</organismsDiffer>
    <experiments>5</experiments>
</comment>
<comment type="interaction">
    <interactant intactId="EBI-717810">
        <id>Q08117</id>
    </interactant>
    <interactant intactId="EBI-747505">
        <id>Q8TAB5</id>
        <label>C1orf216</label>
    </interactant>
    <organismsDiffer>false</organismsDiffer>
    <experiments>3</experiments>
</comment>
<comment type="interaction">
    <interactant intactId="EBI-717810">
        <id>Q08117</id>
    </interactant>
    <interactant intactId="EBI-946029">
        <id>Q6P1W5</id>
        <label>C1orf94</label>
    </interactant>
    <organismsDiffer>false</organismsDiffer>
    <experiments>3</experiments>
</comment>
<comment type="interaction">
    <interactant intactId="EBI-717810">
        <id>Q08117</id>
    </interactant>
    <interactant intactId="EBI-739580">
        <id>Q13137</id>
        <label>CALCOCO2</label>
    </interactant>
    <organismsDiffer>false</organismsDiffer>
    <experiments>3</experiments>
</comment>
<comment type="interaction">
    <interactant intactId="EBI-717810">
        <id>Q08117</id>
    </interactant>
    <interactant intactId="EBI-751319">
        <id>Q9H257</id>
        <label>CARD9</label>
    </interactant>
    <organismsDiffer>false</organismsDiffer>
    <experiments>4</experiments>
</comment>
<comment type="interaction">
    <interactant intactId="EBI-717810">
        <id>Q08117</id>
    </interactant>
    <interactant intactId="EBI-2808286">
        <id>Q2TAC2</id>
        <label>CCDC57</label>
    </interactant>
    <organismsDiffer>false</organismsDiffer>
    <experiments>3</experiments>
</comment>
<comment type="interaction">
    <interactant intactId="EBI-717810">
        <id>Q08117</id>
    </interactant>
    <interactant intactId="EBI-21668062">
        <id>Q8IV13</id>
        <label>CCNJL</label>
    </interactant>
    <organismsDiffer>false</organismsDiffer>
    <experiments>3</experiments>
</comment>
<comment type="interaction">
    <interactant intactId="EBI-717810">
        <id>Q08117</id>
    </interactant>
    <interactant intactId="EBI-739806">
        <id>O75909</id>
        <label>CCNK</label>
    </interactant>
    <organismsDiffer>false</organismsDiffer>
    <experiments>3</experiments>
</comment>
<comment type="interaction">
    <interactant intactId="EBI-717810">
        <id>Q08117</id>
    </interactant>
    <interactant intactId="EBI-749051">
        <id>Q8IYR0</id>
        <label>CFAP206</label>
    </interactant>
    <organismsDiffer>false</organismsDiffer>
    <experiments>3</experiments>
</comment>
<comment type="interaction">
    <interactant intactId="EBI-717810">
        <id>Q08117</id>
    </interactant>
    <interactant intactId="EBI-10292696">
        <id>Q96Q77</id>
        <label>CIB3</label>
    </interactant>
    <organismsDiffer>false</organismsDiffer>
    <experiments>3</experiments>
</comment>
<comment type="interaction">
    <interactant intactId="EBI-717810">
        <id>Q08117</id>
    </interactant>
    <interactant intactId="EBI-746909">
        <id>Q8N684</id>
        <label>CPSF7</label>
    </interactant>
    <organismsDiffer>false</organismsDiffer>
    <experiments>3</experiments>
</comment>
<comment type="interaction">
    <interactant intactId="EBI-717810">
        <id>Q08117</id>
    </interactant>
    <interactant intactId="EBI-739773">
        <id>Q9BSW2</id>
        <label>CRACR2A</label>
    </interactant>
    <organismsDiffer>false</organismsDiffer>
    <experiments>4</experiments>
</comment>
<comment type="interaction">
    <interactant intactId="EBI-717810">
        <id>Q08117</id>
    </interactant>
    <interactant intactId="EBI-748171">
        <id>O43186</id>
        <label>CRX</label>
    </interactant>
    <organismsDiffer>false</organismsDiffer>
    <experiments>3</experiments>
</comment>
<comment type="interaction">
    <interactant intactId="EBI-717810">
        <id>Q08117</id>
    </interactant>
    <interactant intactId="EBI-351257">
        <id>P26196</id>
        <label>DDX6</label>
    </interactant>
    <organismsDiffer>false</organismsDiffer>
    <experiments>3</experiments>
</comment>
<comment type="interaction">
    <interactant intactId="EBI-717810">
        <id>Q08117</id>
    </interactant>
    <interactant intactId="EBI-10233719">
        <id>Q14689-6</id>
        <label>DIP2A</label>
    </interactant>
    <organismsDiffer>false</organismsDiffer>
    <experiments>3</experiments>
</comment>
<comment type="interaction">
    <interactant intactId="EBI-717810">
        <id>Q08117</id>
    </interactant>
    <interactant intactId="EBI-769261">
        <id>Q96JC9</id>
        <label>EAF1</label>
    </interactant>
    <organismsDiffer>false</organismsDiffer>
    <experiments>4</experiments>
</comment>
<comment type="interaction">
    <interactant intactId="EBI-717810">
        <id>Q08117</id>
    </interactant>
    <interactant intactId="EBI-398610">
        <id>O60573</id>
        <label>EIF4E2</label>
    </interactant>
    <organismsDiffer>false</organismsDiffer>
    <experiments>3</experiments>
</comment>
<comment type="interaction">
    <interactant intactId="EBI-717810">
        <id>Q08117</id>
    </interactant>
    <interactant intactId="EBI-744506">
        <id>Q86V42</id>
        <label>FAM124A</label>
    </interactant>
    <organismsDiffer>false</organismsDiffer>
    <experiments>3</experiments>
</comment>
<comment type="interaction">
    <interactant intactId="EBI-717810">
        <id>Q08117</id>
    </interactant>
    <interactant intactId="EBI-741626">
        <id>Q9H5Z6</id>
        <label>FAM124B</label>
    </interactant>
    <organismsDiffer>false</organismsDiffer>
    <experiments>3</experiments>
</comment>
<comment type="interaction">
    <interactant intactId="EBI-717810">
        <id>Q08117</id>
    </interactant>
    <interactant intactId="EBI-10244131">
        <id>Q8TES7-6</id>
        <label>FBF1</label>
    </interactant>
    <organismsDiffer>false</organismsDiffer>
    <experiments>3</experiments>
</comment>
<comment type="interaction">
    <interactant intactId="EBI-717810">
        <id>Q08117</id>
    </interactant>
    <interactant intactId="EBI-983612">
        <id>O15409</id>
        <label>FOXP2</label>
    </interactant>
    <organismsDiffer>false</organismsDiffer>
    <experiments>3</experiments>
</comment>
<comment type="interaction">
    <interactant intactId="EBI-717810">
        <id>Q08117</id>
    </interactant>
    <interactant intactId="EBI-725515">
        <id>O43559</id>
        <label>FRS3</label>
    </interactant>
    <organismsDiffer>false</organismsDiffer>
    <experiments>3</experiments>
</comment>
<comment type="interaction">
    <interactant intactId="EBI-717810">
        <id>Q08117</id>
    </interactant>
    <interactant intactId="EBI-5661036">
        <id>A1L4K1</id>
        <label>FSD2</label>
    </interactant>
    <organismsDiffer>false</organismsDiffer>
    <experiments>4</experiments>
</comment>
<comment type="interaction">
    <interactant intactId="EBI-717810">
        <id>Q08117</id>
    </interactant>
    <interactant intactId="EBI-744302">
        <id>P14136</id>
        <label>GFAP</label>
    </interactant>
    <organismsDiffer>false</organismsDiffer>
    <experiments>3</experiments>
</comment>
<comment type="interaction">
    <interactant intactId="EBI-717810">
        <id>Q08117</id>
    </interactant>
    <interactant intactId="EBI-618309">
        <id>Q08379</id>
        <label>GOLGA2</label>
    </interactant>
    <organismsDiffer>false</organismsDiffer>
    <experiments>3</experiments>
</comment>
<comment type="interaction">
    <interactant intactId="EBI-717810">
        <id>Q08117</id>
    </interactant>
    <interactant intactId="EBI-739467">
        <id>Q9H8Y8</id>
        <label>GORASP2</label>
    </interactant>
    <organismsDiffer>false</organismsDiffer>
    <experiments>4</experiments>
</comment>
<comment type="interaction">
    <interactant intactId="EBI-717810">
        <id>Q08117</id>
    </interactant>
    <interactant intactId="EBI-401755">
        <id>P62993</id>
        <label>GRB2</label>
    </interactant>
    <organismsDiffer>false</organismsDiffer>
    <experiments>3</experiments>
</comment>
<comment type="interaction">
    <interactant intactId="EBI-717810">
        <id>Q08117</id>
    </interactant>
    <interactant intactId="EBI-352986">
        <id>P52597</id>
        <label>HNRNPF</label>
    </interactant>
    <organismsDiffer>false</organismsDiffer>
    <experiments>3</experiments>
</comment>
<comment type="interaction">
    <interactant intactId="EBI-717810">
        <id>Q08117</id>
    </interactant>
    <interactant intactId="EBI-10172004">
        <id>Q8IX15-3</id>
        <label>HOMEZ</label>
    </interactant>
    <organismsDiffer>false</organismsDiffer>
    <experiments>3</experiments>
</comment>
<comment type="interaction">
    <interactant intactId="EBI-717810">
        <id>Q08117</id>
    </interactant>
    <interactant intactId="EBI-466029">
        <id>P42858</id>
        <label>HTT</label>
    </interactant>
    <organismsDiffer>false</organismsDiffer>
    <experiments>3</experiments>
</comment>
<comment type="interaction">
    <interactant intactId="EBI-717810">
        <id>Q08117</id>
    </interactant>
    <interactant intactId="EBI-747204">
        <id>Q9UKT9</id>
        <label>IKZF3</label>
    </interactant>
    <organismsDiffer>false</organismsDiffer>
    <experiments>3</experiments>
</comment>
<comment type="interaction">
    <interactant intactId="EBI-717810">
        <id>Q08117</id>
    </interactant>
    <interactant intactId="EBI-2556193">
        <id>Q63ZY3</id>
        <label>KANK2</label>
    </interactant>
    <organismsDiffer>false</organismsDiffer>
    <experiments>3</experiments>
</comment>
<comment type="interaction">
    <interactant intactId="EBI-717810">
        <id>Q08117</id>
    </interactant>
    <interactant intactId="EBI-2125614">
        <id>Q9BVG8</id>
        <label>KIFC3</label>
    </interactant>
    <organismsDiffer>false</organismsDiffer>
    <experiments>3</experiments>
</comment>
<comment type="interaction">
    <interactant intactId="EBI-717810">
        <id>Q08117</id>
    </interactant>
    <interactant intactId="EBI-10171552">
        <id>A1A4E9</id>
        <label>KRT13</label>
    </interactant>
    <organismsDiffer>false</organismsDiffer>
    <experiments>3</experiments>
</comment>
<comment type="interaction">
    <interactant intactId="EBI-717810">
        <id>Q08117</id>
    </interactant>
    <interactant intactId="EBI-739566">
        <id>P19012</id>
        <label>KRT15</label>
    </interactant>
    <organismsDiffer>false</organismsDiffer>
    <experiments>3</experiments>
</comment>
<comment type="interaction">
    <interactant intactId="EBI-717810">
        <id>Q08117</id>
    </interactant>
    <interactant intactId="EBI-948001">
        <id>Q15323</id>
        <label>KRT31</label>
    </interactant>
    <organismsDiffer>false</organismsDiffer>
    <experiments>3</experiments>
</comment>
<comment type="interaction">
    <interactant intactId="EBI-717810">
        <id>Q08117</id>
    </interactant>
    <interactant intactId="EBI-10171697">
        <id>Q6A162</id>
        <label>KRT40</label>
    </interactant>
    <organismsDiffer>false</organismsDiffer>
    <experiments>3</experiments>
</comment>
<comment type="interaction">
    <interactant intactId="EBI-717810">
        <id>Q08117</id>
    </interactant>
    <interactant intactId="EBI-10172290">
        <id>P60409</id>
        <label>KRTAP10-7</label>
    </interactant>
    <organismsDiffer>false</organismsDiffer>
    <experiments>3</experiments>
</comment>
<comment type="interaction">
    <interactant intactId="EBI-717810">
        <id>Q08117</id>
    </interactant>
    <interactant intactId="EBI-10171774">
        <id>P60410</id>
        <label>KRTAP10-8</label>
    </interactant>
    <organismsDiffer>false</organismsDiffer>
    <experiments>3</experiments>
</comment>
<comment type="interaction">
    <interactant intactId="EBI-717810">
        <id>Q08117</id>
    </interactant>
    <interactant intactId="EBI-10172052">
        <id>P60411</id>
        <label>KRTAP10-9</label>
    </interactant>
    <organismsDiffer>false</organismsDiffer>
    <experiments>3</experiments>
</comment>
<comment type="interaction">
    <interactant intactId="EBI-717810">
        <id>Q08117</id>
    </interactant>
    <interactant intactId="EBI-739909">
        <id>Q969R5</id>
        <label>L3MBTL2</label>
    </interactant>
    <organismsDiffer>false</organismsDiffer>
    <experiments>3</experiments>
</comment>
<comment type="interaction">
    <interactant intactId="EBI-717810">
        <id>Q08117</id>
    </interactant>
    <interactant intactId="EBI-740738">
        <id>O95751</id>
        <label>LDOC1</label>
    </interactant>
    <organismsDiffer>false</organismsDiffer>
    <experiments>3</experiments>
</comment>
<comment type="interaction">
    <interactant intactId="EBI-717810">
        <id>Q08117</id>
    </interactant>
    <interactant intactId="EBI-10286106">
        <id>Q96FQ7</id>
        <label>LINC00526</label>
    </interactant>
    <organismsDiffer>false</organismsDiffer>
    <experiments>3</experiments>
</comment>
<comment type="interaction">
    <interactant intactId="EBI-717810">
        <id>Q08117</id>
    </interactant>
    <interactant intactId="EBI-8639312">
        <id>P25800</id>
        <label>LMO1</label>
    </interactant>
    <organismsDiffer>false</organismsDiffer>
    <experiments>3</experiments>
</comment>
<comment type="interaction">
    <interactant intactId="EBI-717810">
        <id>Q08117</id>
    </interactant>
    <interactant intactId="EBI-739696">
        <id>P25791</id>
        <label>LMO2</label>
    </interactant>
    <organismsDiffer>false</organismsDiffer>
    <experiments>3</experiments>
</comment>
<comment type="interaction">
    <interactant intactId="EBI-717810">
        <id>Q08117</id>
    </interactant>
    <interactant intactId="EBI-2798728">
        <id>P61968</id>
        <label>LMO4</label>
    </interactant>
    <organismsDiffer>false</organismsDiffer>
    <experiments>3</experiments>
</comment>
<comment type="interaction">
    <interactant intactId="EBI-717810">
        <id>Q08117</id>
    </interactant>
    <interactant intactId="EBI-347416">
        <id>Q9Y333</id>
        <label>LSM2</label>
    </interactant>
    <organismsDiffer>false</organismsDiffer>
    <experiments>3</experiments>
</comment>
<comment type="interaction">
    <interactant intactId="EBI-717810">
        <id>Q08117</id>
    </interactant>
    <interactant intactId="EBI-746778">
        <id>Q96A72</id>
        <label>MAGOHB</label>
    </interactant>
    <organismsDiffer>false</organismsDiffer>
    <experiments>3</experiments>
</comment>
<comment type="interaction">
    <interactant intactId="EBI-717810">
        <id>Q08117</id>
    </interactant>
    <interactant intactId="EBI-10225084">
        <id>Q86VM6</id>
        <label>MBNL1</label>
    </interactant>
    <organismsDiffer>false</organismsDiffer>
    <experiments>3</experiments>
</comment>
<comment type="interaction">
    <interactant intactId="EBI-717810">
        <id>Q08117</id>
    </interactant>
    <interactant intactId="EBI-394607">
        <id>Q9NPJ6</id>
        <label>MED4</label>
    </interactant>
    <organismsDiffer>false</organismsDiffer>
    <experiments>3</experiments>
</comment>
<comment type="interaction">
    <interactant intactId="EBI-717810">
        <id>Q08117</id>
    </interactant>
    <interactant intactId="EBI-1048159">
        <id>P55081</id>
        <label>MFAP1</label>
    </interactant>
    <organismsDiffer>false</organismsDiffer>
    <experiments>3</experiments>
</comment>
<comment type="interaction">
    <interactant intactId="EBI-717810">
        <id>Q08117</id>
    </interactant>
    <interactant intactId="EBI-1050253">
        <id>Q96PC5</id>
        <label>MIA2</label>
    </interactant>
    <organismsDiffer>false</organismsDiffer>
    <experiments>3</experiments>
</comment>
<comment type="interaction">
    <interactant intactId="EBI-717810">
        <id>Q08117</id>
    </interactant>
    <interactant intactId="EBI-741109">
        <id>Q9UH92</id>
        <label>MLX</label>
    </interactant>
    <organismsDiffer>false</organismsDiffer>
    <experiments>4</experiments>
</comment>
<comment type="interaction">
    <interactant intactId="EBI-717810">
        <id>Q08117</id>
    </interactant>
    <interactant intactId="EBI-399257">
        <id>Q15014</id>
        <label>MORF4L2</label>
    </interactant>
    <organismsDiffer>false</organismsDiffer>
    <experiments>3</experiments>
</comment>
<comment type="interaction">
    <interactant intactId="EBI-717810">
        <id>Q08117</id>
    </interactant>
    <interactant intactId="EBI-742948">
        <id>Q5JR59</id>
        <label>MTUS2</label>
    </interactant>
    <organismsDiffer>false</organismsDiffer>
    <experiments>3</experiments>
</comment>
<comment type="interaction">
    <interactant intactId="EBI-717810">
        <id>Q08117</id>
    </interactant>
    <interactant intactId="EBI-8641936">
        <id>Q15742</id>
        <label>NAB2</label>
    </interactant>
    <organismsDiffer>false</organismsDiffer>
    <experiments>3</experiments>
</comment>
<comment type="interaction">
    <interactant intactId="EBI-717810">
        <id>Q08117</id>
    </interactant>
    <interactant intactId="EBI-1053490">
        <id>Q9UBB6</id>
        <label>NCDN</label>
    </interactant>
    <organismsDiffer>false</organismsDiffer>
    <experiments>3</experiments>
</comment>
<comment type="interaction">
    <interactant intactId="EBI-717810">
        <id>Q08117</id>
    </interactant>
    <interactant intactId="EBI-740364">
        <id>Q9HC98</id>
        <label>NEK6</label>
    </interactant>
    <organismsDiffer>false</organismsDiffer>
    <experiments>3</experiments>
</comment>
<comment type="interaction">
    <interactant intactId="EBI-717810">
        <id>Q08117</id>
    </interactant>
    <interactant intactId="EBI-945833">
        <id>Q7Z3S9</id>
        <label>NOTCH2NLA</label>
    </interactant>
    <organismsDiffer>false</organismsDiffer>
    <experiments>3</experiments>
</comment>
<comment type="interaction">
    <interactant intactId="EBI-717810">
        <id>Q08117</id>
    </interactant>
    <interactant intactId="EBI-10297093">
        <id>Q9BRQ3</id>
        <label>NUDT22</label>
    </interactant>
    <organismsDiffer>false</organismsDiffer>
    <experiments>4</experiments>
</comment>
<comment type="interaction">
    <interactant intactId="EBI-717810">
        <id>Q08117</id>
    </interactant>
    <interactant intactId="EBI-10225049">
        <id>Q7RTU3</id>
        <label>OLIG3</label>
    </interactant>
    <organismsDiffer>false</organismsDiffer>
    <experiments>3</experiments>
</comment>
<comment type="interaction">
    <interactant intactId="EBI-717810">
        <id>Q08117</id>
    </interactant>
    <interactant intactId="EBI-9057006">
        <id>Q9UJX0</id>
        <label>OSGIN1</label>
    </interactant>
    <organismsDiffer>false</organismsDiffer>
    <experiments>3</experiments>
</comment>
<comment type="interaction">
    <interactant intactId="EBI-717810">
        <id>Q08117</id>
    </interactant>
    <interactant intactId="EBI-3921217">
        <id>Q9HBI0</id>
        <label>PARVG</label>
    </interactant>
    <organismsDiffer>false</organismsDiffer>
    <experiments>3</experiments>
</comment>
<comment type="interaction">
    <interactant intactId="EBI-717810">
        <id>Q08117</id>
    </interactant>
    <interactant intactId="EBI-710402">
        <id>Q96I34</id>
        <label>PPP1R16A</label>
    </interactant>
    <organismsDiffer>false</organismsDiffer>
    <experiments>3</experiments>
</comment>
<comment type="interaction">
    <interactant intactId="EBI-717810">
        <id>Q08117</id>
    </interactant>
    <interactant intactId="EBI-1181405">
        <id>Q13131</id>
        <label>PRKAA1</label>
    </interactant>
    <organismsDiffer>false</organismsDiffer>
    <experiments>3</experiments>
</comment>
<comment type="interaction">
    <interactant intactId="EBI-717810">
        <id>Q08117</id>
    </interactant>
    <interactant intactId="EBI-1383852">
        <id>P54646</id>
        <label>PRKAA2</label>
    </interactant>
    <organismsDiffer>false</organismsDiffer>
    <experiments>3</experiments>
</comment>
<comment type="interaction">
    <interactant intactId="EBI-717810">
        <id>Q08117</id>
    </interactant>
    <interactant intactId="EBI-9027467">
        <id>O75360</id>
        <label>PROP1</label>
    </interactant>
    <organismsDiffer>false</organismsDiffer>
    <experiments>4</experiments>
</comment>
<comment type="interaction">
    <interactant intactId="EBI-717810">
        <id>Q08117</id>
    </interactant>
    <interactant intactId="EBI-1567797">
        <id>Q8WWY3</id>
        <label>PRPF31</label>
    </interactant>
    <organismsDiffer>false</organismsDiffer>
    <experiments>3</experiments>
</comment>
<comment type="interaction">
    <interactant intactId="EBI-717810">
        <id>Q08117</id>
    </interactant>
    <interactant intactId="EBI-2803328">
        <id>P79522</id>
        <label>PRR3</label>
    </interactant>
    <organismsDiffer>false</organismsDiffer>
    <experiments>3</experiments>
</comment>
<comment type="interaction">
    <interactant intactId="EBI-717810">
        <id>Q08117</id>
    </interactant>
    <interactant intactId="EBI-1056751">
        <id>Q9Y3E5</id>
        <label>PTRH2</label>
    </interactant>
    <organismsDiffer>false</organismsDiffer>
    <experiments>7</experiments>
</comment>
<comment type="interaction">
    <interactant intactId="EBI-717810">
        <id>Q08117</id>
    </interactant>
    <interactant intactId="EBI-347462">
        <id>P47897</id>
        <label>QARS1</label>
    </interactant>
    <organismsDiffer>false</organismsDiffer>
    <experiments>3</experiments>
</comment>
<comment type="interaction">
    <interactant intactId="EBI-717810">
        <id>Q08117</id>
    </interactant>
    <interactant intactId="EBI-10209725">
        <id>P47897-2</id>
        <label>QARS1</label>
    </interactant>
    <organismsDiffer>false</organismsDiffer>
    <experiments>3</experiments>
</comment>
<comment type="interaction">
    <interactant intactId="EBI-717810">
        <id>Q08117</id>
    </interactant>
    <interactant intactId="EBI-721525">
        <id>P98175</id>
        <label>RBM10</label>
    </interactant>
    <organismsDiffer>false</organismsDiffer>
    <experiments>3</experiments>
</comment>
<comment type="interaction">
    <interactant intactId="EBI-717810">
        <id>Q08117</id>
    </interactant>
    <interactant intactId="EBI-740322">
        <id>Q93062</id>
        <label>RBPMS</label>
    </interactant>
    <organismsDiffer>false</organismsDiffer>
    <experiments>3</experiments>
</comment>
<comment type="interaction">
    <interactant intactId="EBI-717810">
        <id>Q08117</id>
    </interactant>
    <interactant intactId="EBI-307352">
        <id>Q04864</id>
        <label>REL</label>
    </interactant>
    <organismsDiffer>false</organismsDiffer>
    <experiments>3</experiments>
</comment>
<comment type="interaction">
    <interactant intactId="EBI-717810">
        <id>Q08117</id>
    </interactant>
    <interactant intactId="EBI-746118">
        <id>Q8HWS3</id>
        <label>RFX6</label>
    </interactant>
    <organismsDiffer>false</organismsDiffer>
    <experiments>3</experiments>
</comment>
<comment type="interaction">
    <interactant intactId="EBI-717810">
        <id>Q08117</id>
    </interactant>
    <interactant intactId="EBI-372094">
        <id>Q9BQY4</id>
        <label>RHOXF2</label>
    </interactant>
    <organismsDiffer>false</organismsDiffer>
    <experiments>3</experiments>
</comment>
<comment type="interaction">
    <interactant intactId="EBI-717810">
        <id>Q08117</id>
    </interactant>
    <interactant intactId="EBI-10182375">
        <id>Q9UFD9</id>
        <label>RIMBP3</label>
    </interactant>
    <organismsDiffer>false</organismsDiffer>
    <experiments>3</experiments>
</comment>
<comment type="interaction">
    <interactant intactId="EBI-717810">
        <id>Q08117</id>
    </interactant>
    <interactant intactId="EBI-10225152">
        <id>Q96EP0-3</id>
        <label>RNF31</label>
    </interactant>
    <organismsDiffer>false</organismsDiffer>
    <experiments>3</experiments>
</comment>
<comment type="interaction">
    <interactant intactId="EBI-717810">
        <id>Q08117</id>
    </interactant>
    <interactant intactId="EBI-748391">
        <id>Q9BWG6</id>
        <label>SCNM1</label>
    </interactant>
    <organismsDiffer>false</organismsDiffer>
    <experiments>3</experiments>
</comment>
<comment type="interaction">
    <interactant intactId="EBI-717810">
        <id>Q08117</id>
    </interactant>
    <interactant intactId="EBI-727004">
        <id>O00560</id>
        <label>SDCBP</label>
    </interactant>
    <organismsDiffer>false</organismsDiffer>
    <experiments>3</experiments>
</comment>
<comment type="interaction">
    <interactant intactId="EBI-717810">
        <id>Q08117</id>
    </interactant>
    <interactant intactId="EBI-743675">
        <id>Q15475</id>
        <label>SIX1</label>
    </interactant>
    <organismsDiffer>false</organismsDiffer>
    <experiments>3</experiments>
</comment>
<comment type="interaction">
    <interactant intactId="EBI-717810">
        <id>Q08117</id>
    </interactant>
    <interactant intactId="EBI-2902468">
        <id>P12757</id>
        <label>SKIL</label>
    </interactant>
    <organismsDiffer>false</organismsDiffer>
    <experiments>3</experiments>
</comment>
<comment type="interaction">
    <interactant intactId="EBI-717810">
        <id>Q08117</id>
    </interactant>
    <interactant intactId="EBI-347161">
        <id>P84022</id>
        <label>SMAD3</label>
    </interactant>
    <organismsDiffer>false</organismsDiffer>
    <experiments>4</experiments>
</comment>
<comment type="interaction">
    <interactant intactId="EBI-717810">
        <id>Q08117</id>
    </interactant>
    <interactant intactId="EBI-10246938">
        <id>Q5TAL4</id>
        <label>SNRPC</label>
    </interactant>
    <organismsDiffer>false</organismsDiffer>
    <experiments>3</experiments>
</comment>
<comment type="interaction">
    <interactant intactId="EBI-717810">
        <id>Q08117</id>
    </interactant>
    <interactant intactId="EBI-3505701">
        <id>P35711</id>
        <label>SOX5</label>
    </interactant>
    <organismsDiffer>false</organismsDiffer>
    <experiments>4</experiments>
</comment>
<comment type="interaction">
    <interactant intactId="EBI-717810">
        <id>Q08117</id>
    </interactant>
    <interactant intactId="EBI-593303">
        <id>P78362</id>
        <label>SRPK2</label>
    </interactant>
    <organismsDiffer>false</organismsDiffer>
    <experiments>3</experiments>
</comment>
<comment type="interaction">
    <interactant intactId="EBI-717810">
        <id>Q08117</id>
    </interactant>
    <interactant intactId="EBI-749295">
        <id>O75716</id>
        <label>STK16</label>
    </interactant>
    <organismsDiffer>false</organismsDiffer>
    <experiments>3</experiments>
</comment>
<comment type="interaction">
    <interactant intactId="EBI-717810">
        <id>Q08117</id>
    </interactant>
    <interactant intactId="EBI-714135">
        <id>O75558</id>
        <label>STX11</label>
    </interactant>
    <organismsDiffer>false</organismsDiffer>
    <experiments>3</experiments>
</comment>
<comment type="interaction">
    <interactant intactId="EBI-717810">
        <id>Q08117</id>
    </interactant>
    <interactant intactId="EBI-3452216">
        <id>O15119</id>
        <label>TBX3</label>
    </interactant>
    <organismsDiffer>false</organismsDiffer>
    <experiments>3</experiments>
</comment>
<comment type="interaction">
    <interactant intactId="EBI-717810">
        <id>Q08117</id>
    </interactant>
    <interactant intactId="EBI-533224">
        <id>P15884</id>
        <label>TCF4</label>
    </interactant>
    <organismsDiffer>false</organismsDiffer>
    <experiments>3</experiments>
</comment>
<comment type="interaction">
    <interactant intactId="EBI-717810">
        <id>Q08117</id>
    </interactant>
    <interactant intactId="EBI-359224">
        <id>Q13077</id>
        <label>TRAF1</label>
    </interactant>
    <organismsDiffer>false</organismsDiffer>
    <experiments>3</experiments>
</comment>
<comment type="interaction">
    <interactant intactId="EBI-717810">
        <id>Q08117</id>
    </interactant>
    <interactant intactId="EBI-355744">
        <id>Q12933</id>
        <label>TRAF2</label>
    </interactant>
    <organismsDiffer>false</organismsDiffer>
    <experiments>3</experiments>
</comment>
<comment type="interaction">
    <interactant intactId="EBI-717810">
        <id>Q08117</id>
    </interactant>
    <interactant intactId="EBI-2341136">
        <id>Q12899</id>
        <label>TRIM26</label>
    </interactant>
    <organismsDiffer>false</organismsDiffer>
    <experiments>3</experiments>
</comment>
<comment type="interaction">
    <interactant intactId="EBI-717810">
        <id>Q08117</id>
    </interactant>
    <interactant intactId="EBI-719493">
        <id>P14373</id>
        <label>TRIM27</label>
    </interactant>
    <organismsDiffer>false</organismsDiffer>
    <experiments>4</experiments>
</comment>
<comment type="interaction">
    <interactant intactId="EBI-717810">
        <id>Q08117</id>
    </interactant>
    <interactant intactId="EBI-725997">
        <id>Q8WV44</id>
        <label>TRIM41</label>
    </interactant>
    <organismsDiffer>false</organismsDiffer>
    <experiments>3</experiments>
</comment>
<comment type="interaction">
    <interactant intactId="EBI-717810">
        <id>Q08117</id>
    </interactant>
    <interactant intactId="EBI-10261521">
        <id>Q8IV54</id>
        <label>TSC22D4</label>
    </interactant>
    <organismsDiffer>false</organismsDiffer>
    <experiments>3</experiments>
</comment>
<comment type="interaction">
    <interactant intactId="EBI-717810">
        <id>Q08117</id>
    </interactant>
    <interactant intactId="EBI-744794">
        <id>Q9BZW7</id>
        <label>TSGA10</label>
    </interactant>
    <organismsDiffer>false</organismsDiffer>
    <experiments>3</experiments>
</comment>
<comment type="interaction">
    <interactant intactId="EBI-717810">
        <id>Q08117</id>
    </interactant>
    <interactant intactId="EBI-3918381">
        <id>Q96PN8</id>
        <label>TSSK3</label>
    </interactant>
    <organismsDiffer>false</organismsDiffer>
    <experiments>3</experiments>
</comment>
<comment type="interaction">
    <interactant intactId="EBI-717810">
        <id>Q08117</id>
    </interactant>
    <interactant intactId="EBI-742339">
        <id>P26368</id>
        <label>U2AF2</label>
    </interactant>
    <organismsDiffer>false</organismsDiffer>
    <experiments>3</experiments>
</comment>
<comment type="interaction">
    <interactant intactId="EBI-717810">
        <id>Q08117</id>
    </interactant>
    <interactant intactId="EBI-746004">
        <id>Q5T124</id>
        <label>UBXN11</label>
    </interactant>
    <organismsDiffer>false</organismsDiffer>
    <experiments>3</experiments>
</comment>
<comment type="interaction">
    <interactant intactId="EBI-717810">
        <id>Q08117</id>
    </interactant>
    <interactant intactId="EBI-4400866">
        <id>Q9H9H4</id>
        <label>VPS37B</label>
    </interactant>
    <organismsDiffer>false</organismsDiffer>
    <experiments>3</experiments>
</comment>
<comment type="interaction">
    <interactant intactId="EBI-717810">
        <id>Q08117</id>
    </interactant>
    <interactant intactId="EBI-2559305">
        <id>A5D8V6</id>
        <label>VPS37C</label>
    </interactant>
    <organismsDiffer>false</organismsDiffer>
    <experiments>3</experiments>
</comment>
<comment type="interaction">
    <interactant intactId="EBI-717810">
        <id>Q08117</id>
    </interactant>
    <interactant intactId="EBI-744471">
        <id>O43167</id>
        <label>ZBTB24</label>
    </interactant>
    <organismsDiffer>false</organismsDiffer>
    <experiments>3</experiments>
</comment>
<comment type="interaction">
    <interactant intactId="EBI-717810">
        <id>Q08117</id>
    </interactant>
    <interactant intactId="EBI-3439227">
        <id>Q8N5A5</id>
        <label>ZGPAT</label>
    </interactant>
    <organismsDiffer>false</organismsDiffer>
    <experiments>4</experiments>
</comment>
<comment type="interaction">
    <interactant intactId="EBI-717810">
        <id>Q08117</id>
    </interactant>
    <interactant intactId="EBI-10183064">
        <id>Q8N5A5-2</id>
        <label>ZGPAT</label>
    </interactant>
    <organismsDiffer>false</organismsDiffer>
    <experiments>3</experiments>
</comment>
<comment type="interaction">
    <interactant intactId="EBI-717810">
        <id>Q08117</id>
    </interactant>
    <interactant intactId="EBI-3921014">
        <id>Q9H609</id>
        <label>ZNF576</label>
    </interactant>
    <organismsDiffer>false</organismsDiffer>
    <experiments>3</experiments>
</comment>
<comment type="interaction">
    <interactant intactId="EBI-717810">
        <id>Q08117</id>
    </interactant>
    <interactant intactId="EBI-10249899">
        <id>Q9H614</id>
    </interactant>
    <organismsDiffer>false</organismsDiffer>
    <experiments>3</experiments>
</comment>
<comment type="interaction">
    <interactant intactId="EBI-11741437">
        <id>Q08117-2</id>
    </interactant>
    <interactant intactId="EBI-11096309">
        <id>Q9NYB9-2</id>
        <label>ABI2</label>
    </interactant>
    <organismsDiffer>false</organismsDiffer>
    <experiments>6</experiments>
</comment>
<comment type="interaction">
    <interactant intactId="EBI-11741437">
        <id>Q08117-2</id>
    </interactant>
    <interactant intactId="EBI-11976299">
        <id>Q5BKX5-3</id>
        <label>ACTMAP</label>
    </interactant>
    <organismsDiffer>false</organismsDiffer>
    <experiments>3</experiments>
</comment>
<comment type="interaction">
    <interactant intactId="EBI-11741437">
        <id>Q08117-2</id>
    </interactant>
    <interactant intactId="EBI-712648">
        <id>O95994</id>
        <label>AGR2</label>
    </interactant>
    <organismsDiffer>false</organismsDiffer>
    <experiments>3</experiments>
</comment>
<comment type="interaction">
    <interactant intactId="EBI-11741437">
        <id>Q08117-2</id>
    </interactant>
    <interactant intactId="EBI-8643161">
        <id>Q9NX04</id>
        <label>AIRIM</label>
    </interactant>
    <organismsDiffer>false</organismsDiffer>
    <experiments>3</experiments>
</comment>
<comment type="interaction">
    <interactant intactId="EBI-11741437">
        <id>Q08117-2</id>
    </interactant>
    <interactant intactId="EBI-357530">
        <id>Q9ULX6</id>
        <label>AKAP8L</label>
    </interactant>
    <organismsDiffer>false</organismsDiffer>
    <experiments>3</experiments>
</comment>
<comment type="interaction">
    <interactant intactId="EBI-11741437">
        <id>Q08117-2</id>
    </interactant>
    <interactant intactId="EBI-12224467">
        <id>Q9NYG5-2</id>
        <label>ANAPC11</label>
    </interactant>
    <organismsDiffer>false</organismsDiffer>
    <experiments>3</experiments>
</comment>
<comment type="interaction">
    <interactant intactId="EBI-11741437">
        <id>Q08117-2</id>
    </interactant>
    <interactant intactId="EBI-17183751">
        <id>X5D778</id>
        <label>ANKRD11</label>
    </interactant>
    <organismsDiffer>false</organismsDiffer>
    <experiments>3</experiments>
</comment>
<comment type="interaction">
    <interactant intactId="EBI-11741437">
        <id>Q08117-2</id>
    </interactant>
    <interactant intactId="EBI-14199987">
        <id>Q9Y575-3</id>
        <label>ASB3</label>
    </interactant>
    <organismsDiffer>false</organismsDiffer>
    <experiments>3</experiments>
</comment>
<comment type="interaction">
    <interactant intactId="EBI-11741437">
        <id>Q08117-2</id>
    </interactant>
    <interactant intactId="EBI-745689">
        <id>Q7L5A3</id>
        <label>ATOSB</label>
    </interactant>
    <organismsDiffer>false</organismsDiffer>
    <experiments>3</experiments>
</comment>
<comment type="interaction">
    <interactant intactId="EBI-11741437">
        <id>Q08117-2</id>
    </interactant>
    <interactant intactId="EBI-2949658">
        <id>O95429</id>
        <label>BAG4</label>
    </interactant>
    <organismsDiffer>false</organismsDiffer>
    <experiments>3</experiments>
</comment>
<comment type="interaction">
    <interactant intactId="EBI-11741437">
        <id>Q08117-2</id>
    </interactant>
    <interactant intactId="EBI-742750">
        <id>Q8TBE0</id>
        <label>BAHD1</label>
    </interactant>
    <organismsDiffer>false</organismsDiffer>
    <experiments>3</experiments>
</comment>
<comment type="interaction">
    <interactant intactId="EBI-11741437">
        <id>Q08117-2</id>
    </interactant>
    <interactant intactId="EBI-711810">
        <id>O14503</id>
        <label>BHLHE40</label>
    </interactant>
    <organismsDiffer>false</organismsDiffer>
    <experiments>3</experiments>
</comment>
<comment type="interaction">
    <interactant intactId="EBI-11741437">
        <id>Q08117-2</id>
    </interactant>
    <interactant intactId="EBI-517623">
        <id>Q96CA5</id>
        <label>BIRC7</label>
    </interactant>
    <organismsDiffer>false</organismsDiffer>
    <experiments>3</experiments>
</comment>
<comment type="interaction">
    <interactant intactId="EBI-11741437">
        <id>Q08117-2</id>
    </interactant>
    <interactant intactId="EBI-953896">
        <id>Q9NP55</id>
        <label>BPIFA1</label>
    </interactant>
    <organismsDiffer>false</organismsDiffer>
    <experiments>5</experiments>
</comment>
<comment type="interaction">
    <interactant intactId="EBI-11741437">
        <id>Q08117-2</id>
    </interactant>
    <interactant intactId="EBI-358049">
        <id>Q13895</id>
        <label>BYSL</label>
    </interactant>
    <organismsDiffer>false</organismsDiffer>
    <experiments>5</experiments>
</comment>
<comment type="interaction">
    <interactant intactId="EBI-11741437">
        <id>Q08117-2</id>
    </interactant>
    <interactant intactId="EBI-12809220">
        <id>Q5SWW7</id>
        <label>C10orf55</label>
    </interactant>
    <organismsDiffer>false</organismsDiffer>
    <experiments>3</experiments>
</comment>
<comment type="interaction">
    <interactant intactId="EBI-11741437">
        <id>Q08117-2</id>
    </interactant>
    <interactant intactId="EBI-725606">
        <id>Q9NWQ9</id>
        <label>C14orf119</label>
    </interactant>
    <organismsDiffer>false</organismsDiffer>
    <experiments>3</experiments>
</comment>
<comment type="interaction">
    <interactant intactId="EBI-11741437">
        <id>Q08117-2</id>
    </interactant>
    <interactant intactId="EBI-946029">
        <id>Q6P1W5</id>
        <label>C1orf94</label>
    </interactant>
    <organismsDiffer>false</organismsDiffer>
    <experiments>3</experiments>
</comment>
<comment type="interaction">
    <interactant intactId="EBI-11741437">
        <id>Q08117-2</id>
    </interactant>
    <interactant intactId="EBI-739879">
        <id>Q53TS8</id>
        <label>C2CD6</label>
    </interactant>
    <organismsDiffer>false</organismsDiffer>
    <experiments>3</experiments>
</comment>
<comment type="interaction">
    <interactant intactId="EBI-11741437">
        <id>Q08117-2</id>
    </interactant>
    <interactant intactId="EBI-12011224">
        <id>Q9NPB3</id>
        <label>CABP2</label>
    </interactant>
    <organismsDiffer>false</organismsDiffer>
    <experiments>3</experiments>
</comment>
<comment type="interaction">
    <interactant intactId="EBI-11741437">
        <id>Q08117-2</id>
    </interactant>
    <interactant intactId="EBI-10311131">
        <id>Q9NP86</id>
        <label>CABP5</label>
    </interactant>
    <organismsDiffer>false</organismsDiffer>
    <experiments>5</experiments>
</comment>
<comment type="interaction">
    <interactant intactId="EBI-11741437">
        <id>Q08117-2</id>
    </interactant>
    <interactant intactId="EBI-744556">
        <id>Q96HB5</id>
        <label>CCDC120</label>
    </interactant>
    <organismsDiffer>false</organismsDiffer>
    <experiments>6</experiments>
</comment>
<comment type="interaction">
    <interactant intactId="EBI-11741437">
        <id>Q08117-2</id>
    </interactant>
    <interactant intactId="EBI-12010594">
        <id>O75909-2</id>
        <label>CCNK</label>
    </interactant>
    <organismsDiffer>false</organismsDiffer>
    <experiments>3</experiments>
</comment>
<comment type="interaction">
    <interactant intactId="EBI-11741437">
        <id>Q08117-2</id>
    </interactant>
    <interactant intactId="EBI-2556878">
        <id>P22674</id>
        <label>CCNO</label>
    </interactant>
    <organismsDiffer>false</organismsDiffer>
    <experiments>3</experiments>
</comment>
<comment type="interaction">
    <interactant intactId="EBI-11741437">
        <id>Q08117-2</id>
    </interactant>
    <interactant intactId="EBI-718615">
        <id>Q9H5F2</id>
        <label>CFAP68</label>
    </interactant>
    <organismsDiffer>false</organismsDiffer>
    <experiments>3</experiments>
</comment>
<comment type="interaction">
    <interactant intactId="EBI-11741437">
        <id>Q08117-2</id>
    </interactant>
    <interactant intactId="EBI-10292696">
        <id>Q96Q77</id>
        <label>CIB3</label>
    </interactant>
    <organismsDiffer>false</organismsDiffer>
    <experiments>3</experiments>
</comment>
<comment type="interaction">
    <interactant intactId="EBI-11741437">
        <id>Q08117-2</id>
    </interactant>
    <interactant intactId="EBI-10192241">
        <id>O95833</id>
        <label>CLIC3</label>
    </interactant>
    <organismsDiffer>false</organismsDiffer>
    <experiments>3</experiments>
</comment>
<comment type="interaction">
    <interactant intactId="EBI-11741437">
        <id>Q08117-2</id>
    </interactant>
    <interactant intactId="EBI-12823145">
        <id>Q96DZ5</id>
        <label>CLIP3</label>
    </interactant>
    <organismsDiffer>false</organismsDiffer>
    <experiments>3</experiments>
</comment>
<comment type="interaction">
    <interactant intactId="EBI-11741437">
        <id>Q08117-2</id>
    </interactant>
    <interactant intactId="EBI-12819063">
        <id>Q9BYD5</id>
        <label>CNFN</label>
    </interactant>
    <organismsDiffer>false</organismsDiffer>
    <experiments>3</experiments>
</comment>
<comment type="interaction">
    <interactant intactId="EBI-11741437">
        <id>Q08117-2</id>
    </interactant>
    <interactant intactId="EBI-6269632">
        <id>Q96BR5</id>
        <label>COA7</label>
    </interactant>
    <organismsDiffer>false</organismsDiffer>
    <experiments>3</experiments>
</comment>
<comment type="interaction">
    <interactant intactId="EBI-11741437">
        <id>Q08117-2</id>
    </interactant>
    <interactant intactId="EBI-11523759">
        <id>Q8N684-3</id>
        <label>CPSF7</label>
    </interactant>
    <organismsDiffer>false</organismsDiffer>
    <experiments>3</experiments>
</comment>
<comment type="interaction">
    <interactant intactId="EBI-11741437">
        <id>Q08117-2</id>
    </interactant>
    <interactant intactId="EBI-739773">
        <id>Q9BSW2</id>
        <label>CRACR2A</label>
    </interactant>
    <organismsDiffer>false</organismsDiffer>
    <experiments>3</experiments>
</comment>
<comment type="interaction">
    <interactant intactId="EBI-11741437">
        <id>Q08117-2</id>
    </interactant>
    <interactant intactId="EBI-748171">
        <id>O43186</id>
        <label>CRX</label>
    </interactant>
    <organismsDiffer>false</organismsDiffer>
    <experiments>3</experiments>
</comment>
<comment type="interaction">
    <interactant intactId="EBI-11741437">
        <id>Q08117-2</id>
    </interactant>
    <interactant intactId="EBI-347804">
        <id>P68400</id>
        <label>CSNK2A1</label>
    </interactant>
    <organismsDiffer>false</organismsDiffer>
    <experiments>3</experiments>
</comment>
<comment type="interaction">
    <interactant intactId="EBI-11741437">
        <id>Q08117-2</id>
    </interactant>
    <interactant intactId="EBI-711360">
        <id>P33240</id>
        <label>CSTF2</label>
    </interactant>
    <organismsDiffer>false</organismsDiffer>
    <experiments>3</experiments>
</comment>
<comment type="interaction">
    <interactant intactId="EBI-11741437">
        <id>Q08117-2</id>
    </interactant>
    <interactant intactId="EBI-747012">
        <id>Q9H0L4</id>
        <label>CSTF2T</label>
    </interactant>
    <organismsDiffer>false</organismsDiffer>
    <experiments>6</experiments>
</comment>
<comment type="interaction">
    <interactant intactId="EBI-11741437">
        <id>Q08117-2</id>
    </interactant>
    <interactant intactId="EBI-6873363">
        <id>Q8WUE5</id>
        <label>CT55</label>
    </interactant>
    <organismsDiffer>false</organismsDiffer>
    <experiments>3</experiments>
</comment>
<comment type="interaction">
    <interactant intactId="EBI-11741437">
        <id>Q08117-2</id>
    </interactant>
    <interactant intactId="EBI-10171902">
        <id>P56545-3</id>
        <label>CTBP2</label>
    </interactant>
    <organismsDiffer>false</organismsDiffer>
    <experiments>3</experiments>
</comment>
<comment type="interaction">
    <interactant intactId="EBI-11741437">
        <id>Q08117-2</id>
    </interactant>
    <interactant intactId="EBI-3867333">
        <id>A8MQ03</id>
        <label>CYSRT1</label>
    </interactant>
    <organismsDiffer>false</organismsDiffer>
    <experiments>3</experiments>
</comment>
<comment type="interaction">
    <interactant intactId="EBI-11741437">
        <id>Q08117-2</id>
    </interactant>
    <interactant intactId="EBI-724310">
        <id>Q15038</id>
        <label>DAZAP2</label>
    </interactant>
    <organismsDiffer>false</organismsDiffer>
    <experiments>3</experiments>
</comment>
<comment type="interaction">
    <interactant intactId="EBI-11741437">
        <id>Q08117-2</id>
    </interactant>
    <interactant intactId="EBI-351257">
        <id>P26196</id>
        <label>DDX6</label>
    </interactant>
    <organismsDiffer>false</organismsDiffer>
    <experiments>3</experiments>
</comment>
<comment type="interaction">
    <interactant intactId="EBI-11741437">
        <id>Q08117-2</id>
    </interactant>
    <interactant intactId="EBI-18072054">
        <id>Q9Y5R5</id>
        <label>DMRT2</label>
    </interactant>
    <organismsDiffer>false</organismsDiffer>
    <experiments>3</experiments>
</comment>
<comment type="interaction">
    <interactant intactId="EBI-11741437">
        <id>Q08117-2</id>
    </interactant>
    <interactant intactId="EBI-9679045">
        <id>Q9NQL9</id>
        <label>DMRT3</label>
    </interactant>
    <organismsDiffer>false</organismsDiffer>
    <experiments>3</experiments>
</comment>
<comment type="interaction">
    <interactant intactId="EBI-11741437">
        <id>Q08117-2</id>
    </interactant>
    <interactant intactId="EBI-954466">
        <id>Q96MA1</id>
        <label>DMRTB1</label>
    </interactant>
    <organismsDiffer>false</organismsDiffer>
    <experiments>3</experiments>
</comment>
<comment type="interaction">
    <interactant intactId="EBI-11741437">
        <id>Q08117-2</id>
    </interactant>
    <interactant intactId="EBI-2880244">
        <id>Q6PKX4</id>
        <label>DOK6</label>
    </interactant>
    <organismsDiffer>false</organismsDiffer>
    <experiments>3</experiments>
</comment>
<comment type="interaction">
    <interactant intactId="EBI-11741437">
        <id>Q08117-2</id>
    </interactant>
    <interactant intactId="EBI-740850">
        <id>O14641</id>
        <label>DVL2</label>
    </interactant>
    <organismsDiffer>false</organismsDiffer>
    <experiments>3</experiments>
</comment>
<comment type="interaction">
    <interactant intactId="EBI-11741437">
        <id>Q08117-2</id>
    </interactant>
    <interactant intactId="EBI-739789">
        <id>Q92997</id>
        <label>DVL3</label>
    </interactant>
    <organismsDiffer>false</organismsDiffer>
    <experiments>3</experiments>
</comment>
<comment type="interaction">
    <interactant intactId="EBI-11741437">
        <id>Q08117-2</id>
    </interactant>
    <interactant intactId="EBI-740680">
        <id>Q8WWB3</id>
        <label>DYDC1</label>
    </interactant>
    <organismsDiffer>false</organismsDiffer>
    <experiments>3</experiments>
</comment>
<comment type="interaction">
    <interactant intactId="EBI-11741437">
        <id>Q08117-2</id>
    </interactant>
    <interactant intactId="EBI-743414">
        <id>O95967</id>
        <label>EFEMP2</label>
    </interactant>
    <organismsDiffer>false</organismsDiffer>
    <experiments>6</experiments>
</comment>
<comment type="interaction">
    <interactant intactId="EBI-11741437">
        <id>Q08117-2</id>
    </interactant>
    <interactant intactId="EBI-743105">
        <id>Q5JVL4</id>
        <label>EFHC1</label>
    </interactant>
    <organismsDiffer>false</organismsDiffer>
    <experiments>3</experiments>
</comment>
<comment type="interaction">
    <interactant intactId="EBI-11741437">
        <id>Q08117-2</id>
    </interactant>
    <interactant intactId="EBI-750700">
        <id>Q8N9N8</id>
        <label>EIF1AD</label>
    </interactant>
    <organismsDiffer>false</organismsDiffer>
    <experiments>3</experiments>
</comment>
<comment type="interaction">
    <interactant intactId="EBI-11741437">
        <id>Q08117-2</id>
    </interactant>
    <interactant intactId="EBI-8465203">
        <id>P50548</id>
        <label>ERF</label>
    </interactant>
    <organismsDiffer>false</organismsDiffer>
    <experiments>3</experiments>
</comment>
<comment type="interaction">
    <interactant intactId="EBI-11741437">
        <id>Q08117-2</id>
    </interactant>
    <interactant intactId="EBI-371876">
        <id>Q9NQT4</id>
        <label>EXOSC5</label>
    </interactant>
    <organismsDiffer>false</organismsDiffer>
    <experiments>3</experiments>
</comment>
<comment type="interaction">
    <interactant intactId="EBI-11741437">
        <id>Q08117-2</id>
    </interactant>
    <interactant intactId="EBI-12807776">
        <id>O00167-2</id>
        <label>EYA2</label>
    </interactant>
    <organismsDiffer>false</organismsDiffer>
    <experiments>3</experiments>
</comment>
<comment type="interaction">
    <interactant intactId="EBI-11741437">
        <id>Q08117-2</id>
    </interactant>
    <interactant intactId="EBI-11986315">
        <id>Q9H5Z6-2</id>
        <label>FAM124B</label>
    </interactant>
    <organismsDiffer>false</organismsDiffer>
    <experiments>3</experiments>
</comment>
<comment type="interaction">
    <interactant intactId="EBI-11741437">
        <id>Q08117-2</id>
    </interactant>
    <interactant intactId="EBI-12193763">
        <id>A1KXE4-2</id>
        <label>FAM168B</label>
    </interactant>
    <organismsDiffer>false</organismsDiffer>
    <experiments>3</experiments>
</comment>
<comment type="interaction">
    <interactant intactId="EBI-11741437">
        <id>Q08117-2</id>
    </interactant>
    <interactant intactId="EBI-19153639">
        <id>Q9NTX9</id>
        <label>FAM217B</label>
    </interactant>
    <organismsDiffer>false</organismsDiffer>
    <experiments>3</experiments>
</comment>
<comment type="interaction">
    <interactant intactId="EBI-11741437">
        <id>Q08117-2</id>
    </interactant>
    <interactant intactId="EBI-6658203">
        <id>Q86YD7</id>
        <label>FAM90A1</label>
    </interactant>
    <organismsDiffer>false</organismsDiffer>
    <experiments>3</experiments>
</comment>
<comment type="interaction">
    <interactant intactId="EBI-11741437">
        <id>Q08117-2</id>
    </interactant>
    <interactant intactId="EBI-11958845">
        <id>O94868-3</id>
        <label>FCHSD2</label>
    </interactant>
    <organismsDiffer>false</organismsDiffer>
    <experiments>3</experiments>
</comment>
<comment type="interaction">
    <interactant intactId="EBI-11741437">
        <id>Q08117-2</id>
    </interactant>
    <interactant intactId="EBI-741101">
        <id>Q13643</id>
        <label>FHL3</label>
    </interactant>
    <organismsDiffer>false</organismsDiffer>
    <experiments>4</experiments>
</comment>
<comment type="interaction">
    <interactant intactId="EBI-11741437">
        <id>Q08117-2</id>
    </interactant>
    <interactant intactId="EBI-2806743">
        <id>P53539</id>
        <label>FOSB</label>
    </interactant>
    <organismsDiffer>false</organismsDiffer>
    <experiments>3</experiments>
</comment>
<comment type="interaction">
    <interactant intactId="EBI-11741437">
        <id>Q08117-2</id>
    </interactant>
    <interactant intactId="EBI-17282008">
        <id>O60548</id>
        <label>FOXD2</label>
    </interactant>
    <organismsDiffer>false</organismsDiffer>
    <experiments>3</experiments>
</comment>
<comment type="interaction">
    <interactant intactId="EBI-11741437">
        <id>Q08117-2</id>
    </interactant>
    <interactant intactId="EBI-11319000">
        <id>O15353</id>
        <label>FOXN1</label>
    </interactant>
    <organismsDiffer>false</organismsDiffer>
    <experiments>3</experiments>
</comment>
<comment type="interaction">
    <interactant intactId="EBI-11741437">
        <id>Q08117-2</id>
    </interactant>
    <interactant intactId="EBI-983612">
        <id>O15409</id>
        <label>FOXP2</label>
    </interactant>
    <organismsDiffer>false</organismsDiffer>
    <experiments>3</experiments>
</comment>
<comment type="interaction">
    <interactant intactId="EBI-11741437">
        <id>Q08117-2</id>
    </interactant>
    <interactant intactId="EBI-725515">
        <id>O43559</id>
        <label>FRS3</label>
    </interactant>
    <organismsDiffer>false</organismsDiffer>
    <experiments>5</experiments>
</comment>
<comment type="interaction">
    <interactant intactId="EBI-11741437">
        <id>Q08117-2</id>
    </interactant>
    <interactant intactId="EBI-5661036">
        <id>A1L4K1</id>
        <label>FSD2</label>
    </interactant>
    <organismsDiffer>false</organismsDiffer>
    <experiments>3</experiments>
</comment>
<comment type="interaction">
    <interactant intactId="EBI-11741437">
        <id>Q08117-2</id>
    </interactant>
    <interactant intactId="EBI-9090198">
        <id>P15976-2</id>
        <label>GATA1</label>
    </interactant>
    <organismsDiffer>false</organismsDiffer>
    <experiments>5</experiments>
</comment>
<comment type="interaction">
    <interactant intactId="EBI-11741437">
        <id>Q08117-2</id>
    </interactant>
    <interactant intactId="EBI-746252">
        <id>Q96CN9</id>
        <label>GCC1</label>
    </interactant>
    <organismsDiffer>false</organismsDiffer>
    <experiments>3</experiments>
</comment>
<comment type="interaction">
    <interactant intactId="EBI-11741437">
        <id>Q08117-2</id>
    </interactant>
    <interactant intactId="EBI-744104">
        <id>P55040</id>
        <label>GEM</label>
    </interactant>
    <organismsDiffer>false</organismsDiffer>
    <experiments>3</experiments>
</comment>
<comment type="interaction">
    <interactant intactId="EBI-11741437">
        <id>Q08117-2</id>
    </interactant>
    <interactant intactId="EBI-947774">
        <id>O75420</id>
        <label>GIGYF1</label>
    </interactant>
    <organismsDiffer>false</organismsDiffer>
    <experiments>3</experiments>
</comment>
<comment type="interaction">
    <interactant intactId="EBI-11741437">
        <id>Q08117-2</id>
    </interactant>
    <interactant intactId="EBI-7251368">
        <id>Q9BZE0</id>
        <label>GLIS2</label>
    </interactant>
    <organismsDiffer>false</organismsDiffer>
    <experiments>3</experiments>
</comment>
<comment type="interaction">
    <interactant intactId="EBI-11741437">
        <id>Q08117-2</id>
    </interactant>
    <interactant intactId="EBI-618309">
        <id>Q08379</id>
        <label>GOLGA2</label>
    </interactant>
    <organismsDiffer>false</organismsDiffer>
    <experiments>6</experiments>
</comment>
<comment type="interaction">
    <interactant intactId="EBI-11741437">
        <id>Q08117-2</id>
    </interactant>
    <interactant intactId="EBI-5916454">
        <id>A6NEM1</id>
        <label>GOLGA6L9</label>
    </interactant>
    <organismsDiffer>false</organismsDiffer>
    <experiments>3</experiments>
</comment>
<comment type="interaction">
    <interactant intactId="EBI-11741437">
        <id>Q08117-2</id>
    </interactant>
    <interactant intactId="EBI-739467">
        <id>Q9H8Y8</id>
        <label>GORASP2</label>
    </interactant>
    <organismsDiffer>false</organismsDiffer>
    <experiments>3</experiments>
</comment>
<comment type="interaction">
    <interactant intactId="EBI-11741437">
        <id>Q08117-2</id>
    </interactant>
    <interactant intactId="EBI-751540">
        <id>O95872</id>
        <label>GPANK1</label>
    </interactant>
    <organismsDiffer>false</organismsDiffer>
    <experiments>3</experiments>
</comment>
<comment type="interaction">
    <interactant intactId="EBI-11741437">
        <id>Q08117-2</id>
    </interactant>
    <interactant intactId="EBI-11959863">
        <id>Q9NWQ4-1</id>
        <label>GPATCH2L</label>
    </interactant>
    <organismsDiffer>false</organismsDiffer>
    <experiments>3</experiments>
</comment>
<comment type="interaction">
    <interactant intactId="EBI-11741437">
        <id>Q08117-2</id>
    </interactant>
    <interactant intactId="EBI-747754">
        <id>P28799</id>
        <label>GRN</label>
    </interactant>
    <organismsDiffer>false</organismsDiffer>
    <experiments>3</experiments>
</comment>
<comment type="interaction">
    <interactant intactId="EBI-11741437">
        <id>Q08117-2</id>
    </interactant>
    <interactant intactId="EBI-740553">
        <id>P13807</id>
        <label>GYS1</label>
    </interactant>
    <organismsDiffer>false</organismsDiffer>
    <experiments>5</experiments>
</comment>
<comment type="interaction">
    <interactant intactId="EBI-11741437">
        <id>Q08117-2</id>
    </interactant>
    <interactant intactId="EBI-11953488">
        <id>P56524-2</id>
        <label>HDAC4</label>
    </interactant>
    <organismsDiffer>false</organismsDiffer>
    <experiments>3</experiments>
</comment>
<comment type="interaction">
    <interactant intactId="EBI-11741437">
        <id>Q08117-2</id>
    </interactant>
    <interactant intactId="EBI-745201">
        <id>Q9BSH5</id>
        <label>HDHD3</label>
    </interactant>
    <organismsDiffer>false</organismsDiffer>
    <experiments>3</experiments>
</comment>
<comment type="interaction">
    <interactant intactId="EBI-11741437">
        <id>Q08117-2</id>
    </interactant>
    <interactant intactId="EBI-12057631">
        <id>A0A087WSW0</id>
        <label>HELT</label>
    </interactant>
    <organismsDiffer>false</organismsDiffer>
    <experiments>4</experiments>
</comment>
<comment type="interaction">
    <interactant intactId="EBI-11741437">
        <id>Q08117-2</id>
    </interactant>
    <interactant intactId="EBI-5460660">
        <id>Q96MH2</id>
        <label>HEXIM2</label>
    </interactant>
    <organismsDiffer>false</organismsDiffer>
    <experiments>3</experiments>
</comment>
<comment type="interaction">
    <interactant intactId="EBI-11741437">
        <id>Q08117-2</id>
    </interactant>
    <interactant intactId="EBI-16429135">
        <id>A0A0S2Z4Q4</id>
        <label>HGS</label>
    </interactant>
    <organismsDiffer>false</organismsDiffer>
    <experiments>3</experiments>
</comment>
<comment type="interaction">
    <interactant intactId="EBI-11741437">
        <id>Q08117-2</id>
    </interactant>
    <interactant intactId="EBI-740220">
        <id>O14964</id>
        <label>HGS</label>
    </interactant>
    <organismsDiffer>false</organismsDiffer>
    <experiments>8</experiments>
</comment>
<comment type="interaction">
    <interactant intactId="EBI-11741437">
        <id>Q08117-2</id>
    </interactant>
    <interactant intactId="EBI-747421">
        <id>Q03014</id>
        <label>HHEX</label>
    </interactant>
    <organismsDiffer>false</organismsDiffer>
    <experiments>3</experiments>
</comment>
<comment type="interaction">
    <interactant intactId="EBI-11741437">
        <id>Q08117-2</id>
    </interactant>
    <interactant intactId="EBI-352986">
        <id>P52597</id>
        <label>HNRNPF</label>
    </interactant>
    <organismsDiffer>false</organismsDiffer>
    <experiments>3</experiments>
</comment>
<comment type="interaction">
    <interactant intactId="EBI-11741437">
        <id>Q08117-2</id>
    </interactant>
    <interactant intactId="EBI-7060731">
        <id>P61978-2</id>
        <label>HNRNPK</label>
    </interactant>
    <organismsDiffer>false</organismsDiffer>
    <experiments>5</experiments>
</comment>
<comment type="interaction">
    <interactant intactId="EBI-11741437">
        <id>Q08117-2</id>
    </interactant>
    <interactant intactId="EBI-740785">
        <id>P49639</id>
        <label>HOXA1</label>
    </interactant>
    <organismsDiffer>false</organismsDiffer>
    <experiments>3</experiments>
</comment>
<comment type="interaction">
    <interactant intactId="EBI-11741437">
        <id>Q08117-2</id>
    </interactant>
    <interactant intactId="EBI-3893317">
        <id>P09067</id>
        <label>HOXB5</label>
    </interactant>
    <organismsDiffer>false</organismsDiffer>
    <experiments>5</experiments>
</comment>
<comment type="interaction">
    <interactant intactId="EBI-11741437">
        <id>Q08117-2</id>
    </interactant>
    <interactant intactId="EBI-1752118">
        <id>P31273</id>
        <label>HOXC8</label>
    </interactant>
    <organismsDiffer>false</organismsDiffer>
    <experiments>3</experiments>
</comment>
<comment type="interaction">
    <interactant intactId="EBI-11741437">
        <id>Q08117-2</id>
    </interactant>
    <interactant intactId="EBI-1779423">
        <id>P31274</id>
        <label>HOXC9</label>
    </interactant>
    <organismsDiffer>false</organismsDiffer>
    <experiments>3</experiments>
</comment>
<comment type="interaction">
    <interactant intactId="EBI-11741437">
        <id>Q08117-2</id>
    </interactant>
    <interactant intactId="EBI-747204">
        <id>Q9UKT9</id>
        <label>IKZF3</label>
    </interactant>
    <organismsDiffer>false</organismsDiffer>
    <experiments>5</experiments>
</comment>
<comment type="interaction">
    <interactant intactId="EBI-11741437">
        <id>Q08117-2</id>
    </interactant>
    <interactant intactId="EBI-715611">
        <id>Q9C086</id>
        <label>INO80B</label>
    </interactant>
    <organismsDiffer>false</organismsDiffer>
    <experiments>5</experiments>
</comment>
<comment type="interaction">
    <interactant intactId="EBI-11741437">
        <id>Q08117-2</id>
    </interactant>
    <interactant intactId="EBI-769401">
        <id>Q8NBZ0</id>
        <label>INO80E</label>
    </interactant>
    <organismsDiffer>false</organismsDiffer>
    <experiments>3</experiments>
</comment>
<comment type="interaction">
    <interactant intactId="EBI-11741437">
        <id>Q08117-2</id>
    </interactant>
    <interactant intactId="EBI-10236940">
        <id>Q15735</id>
        <label>INPP5J</label>
    </interactant>
    <organismsDiffer>false</organismsDiffer>
    <experiments>3</experiments>
</comment>
<comment type="interaction">
    <interactant intactId="EBI-11741437">
        <id>Q08117-2</id>
    </interactant>
    <interactant intactId="EBI-12166369">
        <id>Q9BZI1</id>
        <label>IRX2</label>
    </interactant>
    <organismsDiffer>false</organismsDiffer>
    <experiments>3</experiments>
</comment>
<comment type="interaction">
    <interactant intactId="EBI-11741437">
        <id>Q08117-2</id>
    </interactant>
    <interactant intactId="EBI-12100506">
        <id>P78412</id>
        <label>IRX6</label>
    </interactant>
    <organismsDiffer>false</organismsDiffer>
    <experiments>5</experiments>
</comment>
<comment type="interaction">
    <interactant intactId="EBI-11741437">
        <id>Q08117-2</id>
    </interactant>
    <interactant intactId="EBI-2556193">
        <id>Q63ZY3</id>
        <label>KANK2</label>
    </interactant>
    <organismsDiffer>false</organismsDiffer>
    <experiments>6</experiments>
</comment>
<comment type="interaction">
    <interactant intactId="EBI-11741437">
        <id>Q08117-2</id>
    </interactant>
    <interactant intactId="EBI-710124">
        <id>O60341</id>
        <label>KDM1A</label>
    </interactant>
    <organismsDiffer>false</organismsDiffer>
    <experiments>3</experiments>
</comment>
<comment type="interaction">
    <interactant intactId="EBI-11741437">
        <id>Q08117-2</id>
    </interactant>
    <interactant intactId="EBI-14069005">
        <id>Q9BVG8-5</id>
        <label>KIFC3</label>
    </interactant>
    <organismsDiffer>false</organismsDiffer>
    <experiments>3</experiments>
</comment>
<comment type="interaction">
    <interactant intactId="EBI-11741437">
        <id>Q08117-2</id>
    </interactant>
    <interactant intactId="EBI-8284732">
        <id>Q13351</id>
        <label>KLF1</label>
    </interactant>
    <organismsDiffer>false</organismsDiffer>
    <experiments>3</experiments>
</comment>
<comment type="interaction">
    <interactant intactId="EBI-11741437">
        <id>Q08117-2</id>
    </interactant>
    <interactant intactId="EBI-7232405">
        <id>O43474</id>
        <label>KLF4</label>
    </interactant>
    <organismsDiffer>false</organismsDiffer>
    <experiments>3</experiments>
</comment>
<comment type="interaction">
    <interactant intactId="EBI-11741437">
        <id>Q08117-2</id>
    </interactant>
    <interactant intactId="EBI-9478422">
        <id>Q96G42</id>
        <label>KLHDC7B</label>
    </interactant>
    <organismsDiffer>false</organismsDiffer>
    <experiments>3</experiments>
</comment>
<comment type="interaction">
    <interactant intactId="EBI-11741437">
        <id>Q08117-2</id>
    </interactant>
    <interactant intactId="EBI-1047093">
        <id>O76011</id>
        <label>KRT34</label>
    </interactant>
    <organismsDiffer>false</organismsDiffer>
    <experiments>3</experiments>
</comment>
<comment type="interaction">
    <interactant intactId="EBI-11741437">
        <id>Q08117-2</id>
    </interactant>
    <interactant intactId="EBI-1058674">
        <id>Q92764</id>
        <label>KRT35</label>
    </interactant>
    <organismsDiffer>false</organismsDiffer>
    <experiments>3</experiments>
</comment>
<comment type="interaction">
    <interactant intactId="EBI-11741437">
        <id>Q08117-2</id>
    </interactant>
    <interactant intactId="EBI-10171697">
        <id>Q6A162</id>
        <label>KRT40</label>
    </interactant>
    <organismsDiffer>false</organismsDiffer>
    <experiments>3</experiments>
</comment>
<comment type="interaction">
    <interactant intactId="EBI-11741437">
        <id>Q08117-2</id>
    </interactant>
    <interactant intactId="EBI-10217483">
        <id>P60412</id>
        <label>KRTAP10-11</label>
    </interactant>
    <organismsDiffer>false</organismsDiffer>
    <experiments>3</experiments>
</comment>
<comment type="interaction">
    <interactant intactId="EBI-11741437">
        <id>Q08117-2</id>
    </interactant>
    <interactant intactId="EBI-10172290">
        <id>P60409</id>
        <label>KRTAP10-7</label>
    </interactant>
    <organismsDiffer>false</organismsDiffer>
    <experiments>3</experiments>
</comment>
<comment type="interaction">
    <interactant intactId="EBI-11741437">
        <id>Q08117-2</id>
    </interactant>
    <interactant intactId="EBI-10171774">
        <id>P60410</id>
        <label>KRTAP10-8</label>
    </interactant>
    <organismsDiffer>false</organismsDiffer>
    <experiments>3</experiments>
</comment>
<comment type="interaction">
    <interactant intactId="EBI-11741437">
        <id>Q08117-2</id>
    </interactant>
    <interactant intactId="EBI-1052037">
        <id>Q8IUC1</id>
        <label>KRTAP11-1</label>
    </interactant>
    <organismsDiffer>false</organismsDiffer>
    <experiments>3</experiments>
</comment>
<comment type="interaction">
    <interactant intactId="EBI-11741437">
        <id>Q08117-2</id>
    </interactant>
    <interactant intactId="EBI-10176379">
        <id>P59991</id>
        <label>KRTAP12-2</label>
    </interactant>
    <organismsDiffer>false</organismsDiffer>
    <experiments>3</experiments>
</comment>
<comment type="interaction">
    <interactant intactId="EBI-11741437">
        <id>Q08117-2</id>
    </interactant>
    <interactant intactId="EBI-11953846">
        <id>Q52LG2</id>
        <label>KRTAP13-2</label>
    </interactant>
    <organismsDiffer>false</organismsDiffer>
    <experiments>3</experiments>
</comment>
<comment type="interaction">
    <interactant intactId="EBI-11741437">
        <id>Q08117-2</id>
    </interactant>
    <interactant intactId="EBI-10241252">
        <id>Q3SY46</id>
        <label>KRTAP13-3</label>
    </interactant>
    <organismsDiffer>false</organismsDiffer>
    <experiments>5</experiments>
</comment>
<comment type="interaction">
    <interactant intactId="EBI-11741437">
        <id>Q08117-2</id>
    </interactant>
    <interactant intactId="EBI-11988175">
        <id>Q9BYP8</id>
        <label>KRTAP17-1</label>
    </interactant>
    <organismsDiffer>false</organismsDiffer>
    <experiments>3</experiments>
</comment>
<comment type="interaction">
    <interactant intactId="EBI-11741437">
        <id>Q08117-2</id>
    </interactant>
    <interactant intactId="EBI-1048945">
        <id>Q3LI72</id>
        <label>KRTAP19-5</label>
    </interactant>
    <organismsDiffer>false</organismsDiffer>
    <experiments>3</experiments>
</comment>
<comment type="interaction">
    <interactant intactId="EBI-11741437">
        <id>Q08117-2</id>
    </interactant>
    <interactant intactId="EBI-10241353">
        <id>Q3SYF9</id>
        <label>KRTAP19-7</label>
    </interactant>
    <organismsDiffer>false</organismsDiffer>
    <experiments>3</experiments>
</comment>
<comment type="interaction">
    <interactant intactId="EBI-11741437">
        <id>Q08117-2</id>
    </interactant>
    <interactant intactId="EBI-11962084">
        <id>Q3LI66</id>
        <label>KRTAP6-2</label>
    </interactant>
    <organismsDiffer>false</organismsDiffer>
    <experiments>3</experiments>
</comment>
<comment type="interaction">
    <interactant intactId="EBI-11741437">
        <id>Q08117-2</id>
    </interactant>
    <interactant intactId="EBI-22311199">
        <id>Q3LI67</id>
        <label>KRTAP6-3</label>
    </interactant>
    <organismsDiffer>false</organismsDiffer>
    <experiments>3</experiments>
</comment>
<comment type="interaction">
    <interactant intactId="EBI-11741437">
        <id>Q08117-2</id>
    </interactant>
    <interactant intactId="EBI-18394498">
        <id>Q8IUC3</id>
        <label>KRTAP7-1</label>
    </interactant>
    <organismsDiffer>false</organismsDiffer>
    <experiments>3</experiments>
</comment>
<comment type="interaction">
    <interactant intactId="EBI-11741437">
        <id>Q08117-2</id>
    </interactant>
    <interactant intactId="EBI-10261141">
        <id>Q8IUC2</id>
        <label>KRTAP8-1</label>
    </interactant>
    <organismsDiffer>false</organismsDiffer>
    <experiments>3</experiments>
</comment>
<comment type="interaction">
    <interactant intactId="EBI-11741437">
        <id>Q08117-2</id>
    </interactant>
    <interactant intactId="EBI-988319">
        <id>P01130</id>
        <label>LDLR</label>
    </interactant>
    <organismsDiffer>false</organismsDiffer>
    <experiments>3</experiments>
</comment>
<comment type="interaction">
    <interactant intactId="EBI-11741437">
        <id>Q08117-2</id>
    </interactant>
    <interactant intactId="EBI-740738">
        <id>O95751</id>
        <label>LDOC1</label>
    </interactant>
    <organismsDiffer>false</organismsDiffer>
    <experiments>3</experiments>
</comment>
<comment type="interaction">
    <interactant intactId="EBI-11741437">
        <id>Q08117-2</id>
    </interactant>
    <interactant intactId="EBI-739546">
        <id>Q96PV6</id>
        <label>LENG8</label>
    </interactant>
    <organismsDiffer>false</organismsDiffer>
    <experiments>3</experiments>
</comment>
<comment type="interaction">
    <interactant intactId="EBI-11741437">
        <id>Q08117-2</id>
    </interactant>
    <interactant intactId="EBI-12039345">
        <id>Q9UBR4-2</id>
        <label>LHX3</label>
    </interactant>
    <organismsDiffer>false</organismsDiffer>
    <experiments>3</experiments>
</comment>
<comment type="interaction">
    <interactant intactId="EBI-11741437">
        <id>Q08117-2</id>
    </interactant>
    <interactant intactId="EBI-11959475">
        <id>P25791-3</id>
        <label>LMO2</label>
    </interactant>
    <organismsDiffer>false</organismsDiffer>
    <experiments>3</experiments>
</comment>
<comment type="interaction">
    <interactant intactId="EBI-11741437">
        <id>Q08117-2</id>
    </interactant>
    <interactant intactId="EBI-2798728">
        <id>P61968</id>
        <label>LMO4</label>
    </interactant>
    <organismsDiffer>false</organismsDiffer>
    <experiments>3</experiments>
</comment>
<comment type="interaction">
    <interactant intactId="EBI-11741437">
        <id>Q08117-2</id>
    </interactant>
    <interactant intactId="EBI-741037">
        <id>Q9BRK4</id>
        <label>LZTS2</label>
    </interactant>
    <organismsDiffer>false</organismsDiffer>
    <experiments>3</experiments>
</comment>
<comment type="interaction">
    <interactant intactId="EBI-11741437">
        <id>Q08117-2</id>
    </interactant>
    <interactant intactId="EBI-746778">
        <id>Q96A72</id>
        <label>MAGOHB</label>
    </interactant>
    <organismsDiffer>false</organismsDiffer>
    <experiments>3</experiments>
</comment>
<comment type="interaction">
    <interactant intactId="EBI-11741437">
        <id>Q08117-2</id>
    </interactant>
    <interactant intactId="EBI-959949">
        <id>P28482</id>
        <label>MAPK1</label>
    </interactant>
    <organismsDiffer>false</organismsDiffer>
    <experiments>3</experiments>
</comment>
<comment type="interaction">
    <interactant intactId="EBI-11741437">
        <id>Q08117-2</id>
    </interactant>
    <interactant intactId="EBI-726739">
        <id>Q9UPY8</id>
        <label>MAPRE3</label>
    </interactant>
    <organismsDiffer>false</organismsDiffer>
    <experiments>3</experiments>
</comment>
<comment type="interaction">
    <interactant intactId="EBI-11741437">
        <id>Q08117-2</id>
    </interactant>
    <interactant intactId="EBI-348259">
        <id>Q96EZ8</id>
        <label>MCRS1</label>
    </interactant>
    <organismsDiffer>false</organismsDiffer>
    <experiments>3</experiments>
</comment>
<comment type="interaction">
    <interactant intactId="EBI-11741437">
        <id>Q08117-2</id>
    </interactant>
    <interactant intactId="EBI-724076">
        <id>Q99750</id>
        <label>MDFI</label>
    </interactant>
    <organismsDiffer>false</organismsDiffer>
    <experiments>3</experiments>
</comment>
<comment type="interaction">
    <interactant intactId="EBI-11741437">
        <id>Q08117-2</id>
    </interactant>
    <interactant intactId="EBI-3957138">
        <id>Q86YW9</id>
        <label>MED12L</label>
    </interactant>
    <organismsDiffer>false</organismsDiffer>
    <experiments>3</experiments>
</comment>
<comment type="interaction">
    <interactant intactId="EBI-11741437">
        <id>Q08117-2</id>
    </interactant>
    <interactant intactId="EBI-394558">
        <id>Q71SY5</id>
        <label>MED25</label>
    </interactant>
    <organismsDiffer>false</organismsDiffer>
    <experiments>3</experiments>
</comment>
<comment type="interaction">
    <interactant intactId="EBI-11741437">
        <id>Q08117-2</id>
    </interactant>
    <interactant intactId="EBI-18582591">
        <id>Q99687-3</id>
        <label>MEIS3</label>
    </interactant>
    <organismsDiffer>false</organismsDiffer>
    <experiments>3</experiments>
</comment>
<comment type="interaction">
    <interactant intactId="EBI-11741437">
        <id>Q08117-2</id>
    </interactant>
    <interactant intactId="EBI-1048159">
        <id>P55081</id>
        <label>MFAP1</label>
    </interactant>
    <organismsDiffer>false</organismsDiffer>
    <experiments>5</experiments>
</comment>
<comment type="interaction">
    <interactant intactId="EBI-11741437">
        <id>Q08117-2</id>
    </interactant>
    <interactant intactId="EBI-2801965">
        <id>Q5JXC2</id>
        <label>MIIP</label>
    </interactant>
    <organismsDiffer>false</organismsDiffer>
    <experiments>3</experiments>
</comment>
<comment type="interaction">
    <interactant intactId="EBI-11741437">
        <id>Q08117-2</id>
    </interactant>
    <interactant intactId="EBI-2340269">
        <id>Q13064</id>
        <label>MKRN3</label>
    </interactant>
    <organismsDiffer>false</organismsDiffer>
    <experiments>5</experiments>
</comment>
<comment type="interaction">
    <interactant intactId="EBI-11741437">
        <id>Q08117-2</id>
    </interactant>
    <interactant intactId="EBI-744248">
        <id>P40692</id>
        <label>MLH1</label>
    </interactant>
    <organismsDiffer>false</organismsDiffer>
    <experiments>3</experiments>
</comment>
<comment type="interaction">
    <interactant intactId="EBI-11741437">
        <id>Q08117-2</id>
    </interactant>
    <interactant intactId="EBI-740216">
        <id>P55198</id>
        <label>MLLT6</label>
    </interactant>
    <organismsDiffer>false</organismsDiffer>
    <experiments>3</experiments>
</comment>
<comment type="interaction">
    <interactant intactId="EBI-11741437">
        <id>Q08117-2</id>
    </interactant>
    <interactant intactId="EBI-8852072">
        <id>Q9UH92-3</id>
        <label>MLX</label>
    </interactant>
    <organismsDiffer>false</organismsDiffer>
    <experiments>3</experiments>
</comment>
<comment type="interaction">
    <interactant intactId="EBI-11741437">
        <id>Q08117-2</id>
    </interactant>
    <interactant intactId="EBI-10288852">
        <id>Q9UBU8-2</id>
        <label>MORF4L1</label>
    </interactant>
    <organismsDiffer>false</organismsDiffer>
    <experiments>3</experiments>
</comment>
<comment type="interaction">
    <interactant intactId="EBI-11741437">
        <id>Q08117-2</id>
    </interactant>
    <interactant intactId="EBI-11599933">
        <id>Q4VC12</id>
        <label>MSS51</label>
    </interactant>
    <organismsDiffer>false</organismsDiffer>
    <experiments>3</experiments>
</comment>
<comment type="interaction">
    <interactant intactId="EBI-11741437">
        <id>Q08117-2</id>
    </interactant>
    <interactant intactId="EBI-6447480">
        <id>P35548</id>
        <label>MSX2</label>
    </interactant>
    <organismsDiffer>false</organismsDiffer>
    <experiments>3</experiments>
</comment>
<comment type="interaction">
    <interactant intactId="EBI-11741437">
        <id>Q08117-2</id>
    </interactant>
    <interactant intactId="EBI-11522433">
        <id>Q5JR59-3</id>
        <label>MTUS2</label>
    </interactant>
    <organismsDiffer>false</organismsDiffer>
    <experiments>6</experiments>
</comment>
<comment type="interaction">
    <interactant intactId="EBI-11741437">
        <id>Q08117-2</id>
    </interactant>
    <interactant intactId="EBI-17491620">
        <id>P13349</id>
        <label>MYF5</label>
    </interactant>
    <organismsDiffer>false</organismsDiffer>
    <experiments>3</experiments>
</comment>
<comment type="interaction">
    <interactant intactId="EBI-11741437">
        <id>Q08117-2</id>
    </interactant>
    <interactant intactId="EBI-12813813">
        <id>A7E2Y1-2</id>
        <label>MYH7B</label>
    </interactant>
    <organismsDiffer>false</organismsDiffer>
    <experiments>3</experiments>
</comment>
<comment type="interaction">
    <interactant intactId="EBI-11741437">
        <id>Q08117-2</id>
    </interactant>
    <interactant intactId="EBI-3906629">
        <id>P15173</id>
        <label>MYOG</label>
    </interactant>
    <organismsDiffer>false</organismsDiffer>
    <experiments>3</experiments>
</comment>
<comment type="interaction">
    <interactant intactId="EBI-11741437">
        <id>Q08117-2</id>
    </interactant>
    <interactant intactId="EBI-8641936">
        <id>Q15742</id>
        <label>NAB2</label>
    </interactant>
    <organismsDiffer>false</organismsDiffer>
    <experiments>3</experiments>
</comment>
<comment type="interaction">
    <interactant intactId="EBI-11741437">
        <id>Q08117-2</id>
    </interactant>
    <interactant intactId="EBI-2515597">
        <id>Q96HR8</id>
        <label>NAF1</label>
    </interactant>
    <organismsDiffer>false</organismsDiffer>
    <experiments>5</experiments>
</comment>
<comment type="interaction">
    <interactant intactId="EBI-11741437">
        <id>Q08117-2</id>
    </interactant>
    <interactant intactId="EBI-10249760">
        <id>Q9UHB4</id>
        <label>NDOR1</label>
    </interactant>
    <organismsDiffer>false</organismsDiffer>
    <experiments>3</experiments>
</comment>
<comment type="interaction">
    <interactant intactId="EBI-11741437">
        <id>Q08117-2</id>
    </interactant>
    <interactant intactId="EBI-1246238">
        <id>P17568</id>
        <label>NDUFB7</label>
    </interactant>
    <organismsDiffer>false</organismsDiffer>
    <experiments>3</experiments>
</comment>
<comment type="interaction">
    <interactant intactId="EBI-11741437">
        <id>Q08117-2</id>
    </interactant>
    <interactant intactId="EBI-11750983">
        <id>Q9HC98-4</id>
        <label>NEK6</label>
    </interactant>
    <organismsDiffer>false</organismsDiffer>
    <experiments>3</experiments>
</comment>
<comment type="interaction">
    <interactant intactId="EBI-11741437">
        <id>Q08117-2</id>
    </interactant>
    <interactant intactId="EBI-22310682">
        <id>P0DPK4</id>
        <label>NOTCH2NLC</label>
    </interactant>
    <organismsDiffer>false</organismsDiffer>
    <experiments>3</experiments>
</comment>
<comment type="interaction">
    <interactant intactId="EBI-11741437">
        <id>Q08117-2</id>
    </interactant>
    <interactant intactId="EBI-741158">
        <id>Q96HA8</id>
        <label>NTAQ1</label>
    </interactant>
    <organismsDiffer>false</organismsDiffer>
    <experiments>5</experiments>
</comment>
<comment type="interaction">
    <interactant intactId="EBI-11741437">
        <id>Q08117-2</id>
    </interactant>
    <interactant intactId="EBI-10297093">
        <id>Q9BRQ3</id>
        <label>NUDT22</label>
    </interactant>
    <organismsDiffer>false</organismsDiffer>
    <experiments>3</experiments>
</comment>
<comment type="interaction">
    <interactant intactId="EBI-11741437">
        <id>Q08117-2</id>
    </interactant>
    <interactant intactId="EBI-591778">
        <id>P61970</id>
        <label>NUTF2</label>
    </interactant>
    <organismsDiffer>false</organismsDiffer>
    <experiments>3</experiments>
</comment>
<comment type="interaction">
    <interactant intactId="EBI-11741437">
        <id>Q08117-2</id>
    </interactant>
    <interactant intactId="EBI-10225049">
        <id>Q7RTU3</id>
        <label>OLIG3</label>
    </interactant>
    <organismsDiffer>false</organismsDiffer>
    <experiments>5</experiments>
</comment>
<comment type="interaction">
    <interactant intactId="EBI-11741437">
        <id>Q08117-2</id>
    </interactant>
    <interactant intactId="EBI-9057006">
        <id>Q9UJX0</id>
        <label>OSGIN1</label>
    </interactant>
    <organismsDiffer>false</organismsDiffer>
    <experiments>3</experiments>
</comment>
<comment type="interaction">
    <interactant intactId="EBI-11741437">
        <id>Q08117-2</id>
    </interactant>
    <interactant intactId="EBI-12813389">
        <id>Q8TDS5</id>
        <label>OXER1</label>
    </interactant>
    <organismsDiffer>false</organismsDiffer>
    <experiments>3</experiments>
</comment>
<comment type="interaction">
    <interactant intactId="EBI-11741437">
        <id>Q08117-2</id>
    </interactant>
    <interactant intactId="EBI-10181968">
        <id>Q7Z4N8</id>
        <label>P4HA3</label>
    </interactant>
    <organismsDiffer>false</organismsDiffer>
    <experiments>3</experiments>
</comment>
<comment type="interaction">
    <interactant intactId="EBI-11741437">
        <id>Q08117-2</id>
    </interactant>
    <interactant intactId="EBI-3921217">
        <id>Q9HBI0</id>
        <label>PARVG</label>
    </interactant>
    <organismsDiffer>false</organismsDiffer>
    <experiments>5</experiments>
</comment>
<comment type="interaction">
    <interactant intactId="EBI-11741437">
        <id>Q08117-2</id>
    </interactant>
    <interactant intactId="EBI-11022007">
        <id>Q9HBE1-4</id>
        <label>PATZ1</label>
    </interactant>
    <organismsDiffer>false</organismsDiffer>
    <experiments>5</experiments>
</comment>
<comment type="interaction">
    <interactant intactId="EBI-11741437">
        <id>Q08117-2</id>
    </interactant>
    <interactant intactId="EBI-2683132">
        <id>Q06710</id>
        <label>PAX8</label>
    </interactant>
    <organismsDiffer>false</organismsDiffer>
    <experiments>3</experiments>
</comment>
<comment type="interaction">
    <interactant intactId="EBI-11741437">
        <id>Q08117-2</id>
    </interactant>
    <interactant intactId="EBI-12111000">
        <id>P55771</id>
        <label>PAX9</label>
    </interactant>
    <organismsDiffer>false</organismsDiffer>
    <experiments>3</experiments>
</comment>
<comment type="interaction">
    <interactant intactId="EBI-11741437">
        <id>Q08117-2</id>
    </interactant>
    <interactant intactId="EBI-946095">
        <id>Q15365</id>
        <label>PCBP1</label>
    </interactant>
    <organismsDiffer>false</organismsDiffer>
    <experiments>3</experiments>
</comment>
<comment type="interaction">
    <interactant intactId="EBI-11741437">
        <id>Q08117-2</id>
    </interactant>
    <interactant intactId="EBI-11956269">
        <id>Q92824-2</id>
        <label>PCSK5</label>
    </interactant>
    <organismsDiffer>false</organismsDiffer>
    <experiments>3</experiments>
</comment>
<comment type="interaction">
    <interactant intactId="EBI-11741437">
        <id>Q08117-2</id>
    </interactant>
    <interactant intactId="EBI-357275">
        <id>Q99471</id>
        <label>PFDN5</label>
    </interactant>
    <organismsDiffer>false</organismsDiffer>
    <experiments>3</experiments>
</comment>
<comment type="interaction">
    <interactant intactId="EBI-11741437">
        <id>Q08117-2</id>
    </interactant>
    <interactant intactId="EBI-530034">
        <id>O43189</id>
        <label>PHF1</label>
    </interactant>
    <organismsDiffer>false</organismsDiffer>
    <experiments>3</experiments>
</comment>
<comment type="interaction">
    <interactant intactId="EBI-11741437">
        <id>Q08117-2</id>
    </interactant>
    <interactant intactId="EBI-79165">
        <id>Q9NRD5</id>
        <label>PICK1</label>
    </interactant>
    <organismsDiffer>false</organismsDiffer>
    <experiments>3</experiments>
</comment>
<comment type="interaction">
    <interactant intactId="EBI-11741437">
        <id>Q08117-2</id>
    </interactant>
    <interactant intactId="EBI-748265">
        <id>P78337</id>
        <label>PITX1</label>
    </interactant>
    <organismsDiffer>false</organismsDiffer>
    <experiments>8</experiments>
</comment>
<comment type="interaction">
    <interactant intactId="EBI-11741437">
        <id>Q08117-2</id>
    </interactant>
    <interactant intactId="EBI-12138495">
        <id>Q99697-2</id>
        <label>PITX2</label>
    </interactant>
    <organismsDiffer>false</organismsDiffer>
    <experiments>3</experiments>
</comment>
<comment type="interaction">
    <interactant intactId="EBI-11741437">
        <id>Q08117-2</id>
    </interactant>
    <interactant intactId="EBI-7233410">
        <id>Q9UM63</id>
        <label>PLAGL1</label>
    </interactant>
    <organismsDiffer>false</organismsDiffer>
    <experiments>3</experiments>
</comment>
<comment type="interaction">
    <interactant intactId="EBI-11741437">
        <id>Q08117-2</id>
    </interactant>
    <interactant intactId="EBI-1055079">
        <id>O15160</id>
        <label>POLR1C</label>
    </interactant>
    <organismsDiffer>false</organismsDiffer>
    <experiments>3</experiments>
</comment>
<comment type="interaction">
    <interactant intactId="EBI-11741437">
        <id>Q08117-2</id>
    </interactant>
    <interactant intactId="EBI-3957793">
        <id>Q9GZV8</id>
        <label>PRDM14</label>
    </interactant>
    <organismsDiffer>false</organismsDiffer>
    <experiments>5</experiments>
</comment>
<comment type="interaction">
    <interactant intactId="EBI-11741437">
        <id>Q08117-2</id>
    </interactant>
    <interactant intactId="EBI-11320284">
        <id>Q9NQX0</id>
        <label>PRDM6</label>
    </interactant>
    <organismsDiffer>false</organismsDiffer>
    <experiments>3</experiments>
</comment>
<comment type="interaction">
    <interactant intactId="EBI-11741437">
        <id>Q08117-2</id>
    </interactant>
    <interactant intactId="EBI-1383852">
        <id>P54646</id>
        <label>PRKAA2</label>
    </interactant>
    <organismsDiffer>false</organismsDiffer>
    <experiments>3</experiments>
</comment>
<comment type="interaction">
    <interactant intactId="EBI-11741437">
        <id>Q08117-2</id>
    </interactant>
    <interactant intactId="EBI-1053424">
        <id>O43741</id>
        <label>PRKAB2</label>
    </interactant>
    <organismsDiffer>false</organismsDiffer>
    <experiments>5</experiments>
</comment>
<comment type="interaction">
    <interactant intactId="EBI-11741437">
        <id>Q08117-2</id>
    </interactant>
    <interactant intactId="EBI-9027467">
        <id>O75360</id>
        <label>PROP1</label>
    </interactant>
    <organismsDiffer>false</organismsDiffer>
    <experiments>3</experiments>
</comment>
<comment type="interaction">
    <interactant intactId="EBI-11741437">
        <id>Q08117-2</id>
    </interactant>
    <interactant intactId="EBI-1567797">
        <id>Q8WWY3</id>
        <label>PRPF31</label>
    </interactant>
    <organismsDiffer>false</organismsDiffer>
    <experiments>10</experiments>
</comment>
<comment type="interaction">
    <interactant intactId="EBI-11741437">
        <id>Q08117-2</id>
    </interactant>
    <interactant intactId="EBI-2803328">
        <id>P79522</id>
        <label>PRR3</label>
    </interactant>
    <organismsDiffer>false</organismsDiffer>
    <experiments>3</experiments>
</comment>
<comment type="interaction">
    <interactant intactId="EBI-11741437">
        <id>Q08117-2</id>
    </interactant>
    <interactant intactId="EBI-11986293">
        <id>P0CG20</id>
        <label>PRR35</label>
    </interactant>
    <organismsDiffer>false</organismsDiffer>
    <experiments>5</experiments>
</comment>
<comment type="interaction">
    <interactant intactId="EBI-11741437">
        <id>Q08117-2</id>
    </interactant>
    <interactant intactId="EBI-372273">
        <id>P20618</id>
        <label>PSMB1</label>
    </interactant>
    <organismsDiffer>false</organismsDiffer>
    <experiments>3</experiments>
</comment>
<comment type="interaction">
    <interactant intactId="EBI-11741437">
        <id>Q08117-2</id>
    </interactant>
    <interactant intactId="EBI-603350">
        <id>P28070</id>
        <label>PSMB4</label>
    </interactant>
    <organismsDiffer>false</organismsDiffer>
    <experiments>5</experiments>
</comment>
<comment type="interaction">
    <interactant intactId="EBI-11741437">
        <id>Q08117-2</id>
    </interactant>
    <interactant intactId="EBI-1055693">
        <id>O75771</id>
        <label>RAD51D</label>
    </interactant>
    <organismsDiffer>false</organismsDiffer>
    <experiments>3</experiments>
</comment>
<comment type="interaction">
    <interactant intactId="EBI-11741437">
        <id>Q08117-2</id>
    </interactant>
    <interactant intactId="EBI-740343">
        <id>Q93062-3</id>
        <label>RBPMS</label>
    </interactant>
    <organismsDiffer>false</organismsDiffer>
    <experiments>5</experiments>
</comment>
<comment type="interaction">
    <interactant intactId="EBI-11741437">
        <id>Q08117-2</id>
    </interactant>
    <interactant intactId="EBI-10265323">
        <id>Q8N443</id>
        <label>RIBC1</label>
    </interactant>
    <organismsDiffer>false</organismsDiffer>
    <experiments>3</experiments>
</comment>
<comment type="interaction">
    <interactant intactId="EBI-11741437">
        <id>Q08117-2</id>
    </interactant>
    <interactant intactId="EBI-10226430">
        <id>Q0D2K3</id>
        <label>RIPPLY1</label>
    </interactant>
    <organismsDiffer>false</organismsDiffer>
    <experiments>3</experiments>
</comment>
<comment type="interaction">
    <interactant intactId="EBI-11741437">
        <id>Q08117-2</id>
    </interactant>
    <interactant intactId="EBI-18560266">
        <id>Q92753-1</id>
        <label>RORB</label>
    </interactant>
    <organismsDiffer>false</organismsDiffer>
    <experiments>3</experiments>
</comment>
<comment type="interaction">
    <interactant intactId="EBI-11741437">
        <id>Q08117-2</id>
    </interactant>
    <interactant intactId="EBI-6257312">
        <id>Q9BVN2</id>
        <label>RUSC1</label>
    </interactant>
    <organismsDiffer>false</organismsDiffer>
    <experiments>3</experiments>
</comment>
<comment type="interaction">
    <interactant intactId="EBI-11741437">
        <id>Q08117-2</id>
    </interactant>
    <interactant intactId="EBI-711613">
        <id>P21673</id>
        <label>SAT1</label>
    </interactant>
    <organismsDiffer>false</organismsDiffer>
    <experiments>3</experiments>
</comment>
<comment type="interaction">
    <interactant intactId="EBI-11741437">
        <id>Q08117-2</id>
    </interactant>
    <interactant intactId="EBI-748391">
        <id>Q9BWG6</id>
        <label>SCNM1</label>
    </interactant>
    <organismsDiffer>false</organismsDiffer>
    <experiments>5</experiments>
</comment>
<comment type="interaction">
    <interactant intactId="EBI-11741437">
        <id>Q08117-2</id>
    </interactant>
    <interactant intactId="EBI-748621">
        <id>Q9UJW9</id>
        <label>SERTAD3</label>
    </interactant>
    <organismsDiffer>false</organismsDiffer>
    <experiments>3</experiments>
</comment>
<comment type="interaction">
    <interactant intactId="EBI-11741437">
        <id>Q08117-2</id>
    </interactant>
    <interactant intactId="EBI-7481343">
        <id>Q01105-2</id>
        <label>SET</label>
    </interactant>
    <organismsDiffer>false</organismsDiffer>
    <experiments>3</experiments>
</comment>
<comment type="interaction">
    <interactant intactId="EBI-11741437">
        <id>Q08117-2</id>
    </interactant>
    <interactant intactId="EBI-348469">
        <id>Q15427</id>
        <label>SF3B4</label>
    </interactant>
    <organismsDiffer>false</organismsDiffer>
    <experiments>3</experiments>
</comment>
<comment type="interaction">
    <interactant intactId="EBI-11741437">
        <id>Q08117-2</id>
    </interactant>
    <interactant intactId="EBI-19952306">
        <id>O14492-2</id>
        <label>SH2B2</label>
    </interactant>
    <organismsDiffer>false</organismsDiffer>
    <experiments>3</experiments>
</comment>
<comment type="interaction">
    <interactant intactId="EBI-11741437">
        <id>Q08117-2</id>
    </interactant>
    <interactant intactId="EBI-11955083">
        <id>Q9NUL5-4</id>
        <label>SHFL</label>
    </interactant>
    <organismsDiffer>false</organismsDiffer>
    <experiments>3</experiments>
</comment>
<comment type="interaction">
    <interactant intactId="EBI-11741437">
        <id>Q08117-2</id>
    </interactant>
    <interactant intactId="EBI-12037847">
        <id>Q6ZSJ9</id>
        <label>SHISA6</label>
    </interactant>
    <organismsDiffer>false</organismsDiffer>
    <experiments>3</experiments>
</comment>
<comment type="interaction">
    <interactant intactId="EBI-11741437">
        <id>Q08117-2</id>
    </interactant>
    <interactant intactId="EBI-743675">
        <id>Q15475</id>
        <label>SIX1</label>
    </interactant>
    <organismsDiffer>false</organismsDiffer>
    <experiments>6</experiments>
</comment>
<comment type="interaction">
    <interactant intactId="EBI-11741437">
        <id>Q08117-2</id>
    </interactant>
    <interactant intactId="EBI-12695166">
        <id>Q9NPC8</id>
        <label>SIX2</label>
    </interactant>
    <organismsDiffer>false</organismsDiffer>
    <experiments>3</experiments>
</comment>
<comment type="interaction">
    <interactant intactId="EBI-11741437">
        <id>Q08117-2</id>
    </interactant>
    <interactant intactId="EBI-347161">
        <id>P84022</id>
        <label>SMAD3</label>
    </interactant>
    <organismsDiffer>false</organismsDiffer>
    <experiments>3</experiments>
</comment>
<comment type="interaction">
    <interactant intactId="EBI-11741437">
        <id>Q08117-2</id>
    </interactant>
    <interactant intactId="EBI-347263">
        <id>Q13485</id>
        <label>SMAD4</label>
    </interactant>
    <organismsDiffer>false</organismsDiffer>
    <experiments>3</experiments>
</comment>
<comment type="interaction">
    <interactant intactId="EBI-11741437">
        <id>Q08117-2</id>
    </interactant>
    <interactant intactId="EBI-358436">
        <id>Q12824-2</id>
        <label>SMARCB1</label>
    </interactant>
    <organismsDiffer>false</organismsDiffer>
    <experiments>3</experiments>
</comment>
<comment type="interaction">
    <interactant intactId="EBI-11741437">
        <id>Q08117-2</id>
    </interactant>
    <interactant intactId="EBI-358489">
        <id>Q96GM5</id>
        <label>SMARCD1</label>
    </interactant>
    <organismsDiffer>false</organismsDiffer>
    <experiments>3</experiments>
</comment>
<comment type="interaction">
    <interactant intactId="EBI-11741437">
        <id>Q08117-2</id>
    </interactant>
    <interactant intactId="EBI-607085">
        <id>P09012</id>
        <label>SNRPA</label>
    </interactant>
    <organismsDiffer>false</organismsDiffer>
    <experiments>3</experiments>
</comment>
<comment type="interaction">
    <interactant intactId="EBI-11741437">
        <id>Q08117-2</id>
    </interactant>
    <interactant intactId="EBI-766589">
        <id>P09234</id>
        <label>SNRPC</label>
    </interactant>
    <organismsDiffer>false</organismsDiffer>
    <experiments>3</experiments>
</comment>
<comment type="interaction">
    <interactant intactId="EBI-11741437">
        <id>Q08117-2</id>
    </interactant>
    <interactant intactId="EBI-12288855">
        <id>Q5JUK2</id>
        <label>SOHLH1</label>
    </interactant>
    <organismsDiffer>false</organismsDiffer>
    <experiments>3</experiments>
</comment>
<comment type="interaction">
    <interactant intactId="EBI-11741437">
        <id>Q08117-2</id>
    </interactant>
    <interactant intactId="EBI-11954419">
        <id>P35711-4</id>
        <label>SOX5</label>
    </interactant>
    <organismsDiffer>false</organismsDiffer>
    <experiments>3</experiments>
</comment>
<comment type="interaction">
    <interactant intactId="EBI-11741437">
        <id>Q08117-2</id>
    </interactant>
    <interactant intactId="EBI-12926726">
        <id>Q9BR10</id>
        <label>SPATA25</label>
    </interactant>
    <organismsDiffer>false</organismsDiffer>
    <experiments>3</experiments>
</comment>
<comment type="interaction">
    <interactant intactId="EBI-11741437">
        <id>Q08117-2</id>
    </interactant>
    <interactant intactId="EBI-742688">
        <id>Q9NZD8</id>
        <label>SPG21</label>
    </interactant>
    <organismsDiffer>false</organismsDiffer>
    <experiments>3</experiments>
</comment>
<comment type="interaction">
    <interactant intactId="EBI-11741437">
        <id>Q08117-2</id>
    </interactant>
    <interactant intactId="EBI-743976">
        <id>Q96LM6</id>
        <label>SPMIP9</label>
    </interactant>
    <organismsDiffer>false</organismsDiffer>
    <experiments>3</experiments>
</comment>
<comment type="interaction">
    <interactant intactId="EBI-11741437">
        <id>Q08117-2</id>
    </interactant>
    <interactant intactId="EBI-714135">
        <id>O75558</id>
        <label>STX11</label>
    </interactant>
    <organismsDiffer>false</organismsDiffer>
    <experiments>3</experiments>
</comment>
<comment type="interaction">
    <interactant intactId="EBI-11741437">
        <id>Q08117-2</id>
    </interactant>
    <interactant intactId="EBI-740595">
        <id>Q9UMX1</id>
        <label>SUFU</label>
    </interactant>
    <organismsDiffer>false</organismsDiffer>
    <experiments>3</experiments>
</comment>
<comment type="interaction">
    <interactant intactId="EBI-11741437">
        <id>Q08117-2</id>
    </interactant>
    <interactant intactId="EBI-2824328">
        <id>O95947</id>
        <label>TBX6</label>
    </interactant>
    <organismsDiffer>false</organismsDiffer>
    <experiments>3</experiments>
</comment>
<comment type="interaction">
    <interactant intactId="EBI-11741437">
        <id>Q08117-2</id>
    </interactant>
    <interactant intactId="EBI-11955057">
        <id>Q8N8B7-2</id>
        <label>TCEANC</label>
    </interactant>
    <organismsDiffer>false</organismsDiffer>
    <experiments>3</experiments>
</comment>
<comment type="interaction">
    <interactant intactId="EBI-11741437">
        <id>Q08117-2</id>
    </interactant>
    <interactant intactId="EBI-11746252">
        <id>Q9NQB0-10</id>
        <label>TCF7L2</label>
    </interactant>
    <organismsDiffer>false</organismsDiffer>
    <experiments>3</experiments>
</comment>
<comment type="interaction">
    <interactant intactId="EBI-11741437">
        <id>Q08117-2</id>
    </interactant>
    <interactant intactId="EBI-747736">
        <id>Q15561</id>
        <label>TEAD4</label>
    </interactant>
    <organismsDiffer>false</organismsDiffer>
    <experiments>3</experiments>
</comment>
<comment type="interaction">
    <interactant intactId="EBI-11741437">
        <id>Q08117-2</id>
    </interactant>
    <interactant intactId="EBI-752030">
        <id>Q96A09</id>
        <label>TENT5B</label>
    </interactant>
    <organismsDiffer>false</organismsDiffer>
    <experiments>6</experiments>
</comment>
<comment type="interaction">
    <interactant intactId="EBI-11741437">
        <id>Q08117-2</id>
    </interactant>
    <interactant intactId="EBI-11952651">
        <id>Q7Z6R9</id>
        <label>TFAP2D</label>
    </interactant>
    <organismsDiffer>false</organismsDiffer>
    <experiments>5</experiments>
</comment>
<comment type="interaction">
    <interactant intactId="EBI-11741437">
        <id>Q08117-2</id>
    </interactant>
    <interactant intactId="EBI-741350">
        <id>Q9BT49</id>
        <label>THAP7</label>
    </interactant>
    <organismsDiffer>false</organismsDiffer>
    <experiments>3</experiments>
</comment>
<comment type="interaction">
    <interactant intactId="EBI-11741437">
        <id>Q08117-2</id>
    </interactant>
    <interactant intactId="EBI-12140557">
        <id>Q6B0B8</id>
        <label>TIGD3</label>
    </interactant>
    <organismsDiffer>false</organismsDiffer>
    <experiments>3</experiments>
</comment>
<comment type="interaction">
    <interactant intactId="EBI-11741437">
        <id>Q08117-2</id>
    </interactant>
    <interactant intactId="EBI-11741437">
        <id>Q08117-2</id>
        <label>TLE5</label>
    </interactant>
    <organismsDiffer>false</organismsDiffer>
    <experiments>5</experiments>
</comment>
<comment type="interaction">
    <interactant intactId="EBI-11741437">
        <id>Q08117-2</id>
    </interactant>
    <interactant intactId="EBI-359224">
        <id>Q13077</id>
        <label>TRAF1</label>
    </interactant>
    <organismsDiffer>false</organismsDiffer>
    <experiments>6</experiments>
</comment>
<comment type="interaction">
    <interactant intactId="EBI-11741437">
        <id>Q08117-2</id>
    </interactant>
    <interactant intactId="EBI-492476">
        <id>Q96RU7</id>
        <label>TRIB3</label>
    </interactant>
    <organismsDiffer>false</organismsDiffer>
    <experiments>3</experiments>
</comment>
<comment type="interaction">
    <interactant intactId="EBI-11741437">
        <id>Q08117-2</id>
    </interactant>
    <interactant intactId="EBI-2341136">
        <id>Q12899</id>
        <label>TRIM26</label>
    </interactant>
    <organismsDiffer>false</organismsDiffer>
    <experiments>3</experiments>
</comment>
<comment type="interaction">
    <interactant intactId="EBI-11741437">
        <id>Q08117-2</id>
    </interactant>
    <interactant intactId="EBI-725997">
        <id>Q8WV44</id>
        <label>TRIM41</label>
    </interactant>
    <organismsDiffer>false</organismsDiffer>
    <experiments>5</experiments>
</comment>
<comment type="interaction">
    <interactant intactId="EBI-11741437">
        <id>Q08117-2</id>
    </interactant>
    <interactant intactId="EBI-742327">
        <id>Q15654</id>
        <label>TRIP6</label>
    </interactant>
    <organismsDiffer>false</organismsDiffer>
    <experiments>3</experiments>
</comment>
<comment type="interaction">
    <interactant intactId="EBI-11741437">
        <id>Q08117-2</id>
    </interactant>
    <interactant intactId="EBI-2515774">
        <id>Q8IZ69</id>
        <label>TRMT2A</label>
    </interactant>
    <organismsDiffer>false</organismsDiffer>
    <experiments>3</experiments>
</comment>
<comment type="interaction">
    <interactant intactId="EBI-11741437">
        <id>Q08117-2</id>
    </interactant>
    <interactant intactId="EBI-12806590">
        <id>Q86WV8</id>
        <label>TSC1</label>
    </interactant>
    <organismsDiffer>false</organismsDiffer>
    <experiments>3</experiments>
</comment>
<comment type="interaction">
    <interactant intactId="EBI-11741437">
        <id>Q08117-2</id>
    </interactant>
    <interactant intactId="EBI-372432">
        <id>Q8WW01</id>
        <label>TSEN15</label>
    </interactant>
    <organismsDiffer>false</organismsDiffer>
    <experiments>3</experiments>
</comment>
<comment type="interaction">
    <interactant intactId="EBI-11741437">
        <id>Q08117-2</id>
    </interactant>
    <interactant intactId="EBI-10241197">
        <id>Q3SY00</id>
        <label>TSGA10IP</label>
    </interactant>
    <organismsDiffer>false</organismsDiffer>
    <experiments>3</experiments>
</comment>
<comment type="interaction">
    <interactant intactId="EBI-11741437">
        <id>Q08117-2</id>
    </interactant>
    <interactant intactId="EBI-9090990">
        <id>Q5W5X9-3</id>
        <label>TTC23</label>
    </interactant>
    <organismsDiffer>false</organismsDiffer>
    <experiments>3</experiments>
</comment>
<comment type="interaction">
    <interactant intactId="EBI-11741437">
        <id>Q08117-2</id>
    </interactant>
    <interactant intactId="EBI-11097439">
        <id>P26368-2</id>
        <label>U2AF2</label>
    </interactant>
    <organismsDiffer>false</organismsDiffer>
    <experiments>3</experiments>
</comment>
<comment type="interaction">
    <interactant intactId="EBI-11741437">
        <id>Q08117-2</id>
    </interactant>
    <interactant intactId="EBI-2514383">
        <id>Q5T6F2</id>
        <label>UBAP2</label>
    </interactant>
    <organismsDiffer>false</organismsDiffer>
    <experiments>3</experiments>
</comment>
<comment type="interaction">
    <interactant intactId="EBI-11741437">
        <id>Q08117-2</id>
    </interactant>
    <interactant intactId="EBI-607755">
        <id>Q9BZL1</id>
        <label>UBL5</label>
    </interactant>
    <organismsDiffer>false</organismsDiffer>
    <experiments>3</experiments>
</comment>
<comment type="interaction">
    <interactant intactId="EBI-11741437">
        <id>Q08117-2</id>
    </interactant>
    <interactant intactId="EBI-11524408">
        <id>Q5T124-6</id>
        <label>UBXN11</label>
    </interactant>
    <organismsDiffer>false</organismsDiffer>
    <experiments>3</experiments>
</comment>
<comment type="interaction">
    <interactant intactId="EBI-11741437">
        <id>Q08117-2</id>
    </interactant>
    <interactant intactId="EBI-743272">
        <id>O75604</id>
        <label>USP2</label>
    </interactant>
    <organismsDiffer>false</organismsDiffer>
    <experiments>5</experiments>
</comment>
<comment type="interaction">
    <interactant intactId="EBI-11741437">
        <id>Q08117-2</id>
    </interactant>
    <interactant intactId="EBI-11975223">
        <id>Q70EL1-9</id>
        <label>USP54</label>
    </interactant>
    <organismsDiffer>false</organismsDiffer>
    <experiments>3</experiments>
</comment>
<comment type="interaction">
    <interactant intactId="EBI-11741437">
        <id>Q08117-2</id>
    </interactant>
    <interactant intactId="EBI-11980193">
        <id>Q14119</id>
        <label>VEZF1</label>
    </interactant>
    <organismsDiffer>false</organismsDiffer>
    <experiments>3</experiments>
</comment>
<comment type="interaction">
    <interactant intactId="EBI-11741437">
        <id>Q08117-2</id>
    </interactant>
    <interactant intactId="EBI-11983165">
        <id>Q99990</id>
        <label>VGLL1</label>
    </interactant>
    <organismsDiffer>false</organismsDiffer>
    <experiments>3</experiments>
</comment>
<comment type="interaction">
    <interactant intactId="EBI-11741437">
        <id>Q08117-2</id>
    </interactant>
    <interactant intactId="EBI-353844">
        <id>P08670</id>
        <label>VIM</label>
    </interactant>
    <organismsDiffer>false</organismsDiffer>
    <experiments>3</experiments>
</comment>
<comment type="interaction">
    <interactant intactId="EBI-11741437">
        <id>Q08117-2</id>
    </interactant>
    <interactant intactId="EBI-4400866">
        <id>Q9H9H4</id>
        <label>VPS37B</label>
    </interactant>
    <organismsDiffer>false</organismsDiffer>
    <experiments>3</experiments>
</comment>
<comment type="interaction">
    <interactant intactId="EBI-11741437">
        <id>Q08117-2</id>
    </interactant>
    <interactant intactId="EBI-2559305">
        <id>A5D8V6</id>
        <label>VPS37C</label>
    </interactant>
    <organismsDiffer>false</organismsDiffer>
    <experiments>3</experiments>
</comment>
<comment type="interaction">
    <interactant intactId="EBI-11741437">
        <id>Q08117-2</id>
    </interactant>
    <interactant intactId="EBI-1051237">
        <id>Q9BYJ9</id>
        <label>YTHDF1</label>
    </interactant>
    <organismsDiffer>false</organismsDiffer>
    <experiments>3</experiments>
</comment>
<comment type="interaction">
    <interactant intactId="EBI-11741437">
        <id>Q08117-2</id>
    </interactant>
    <interactant intactId="EBI-711925">
        <id>Q05516</id>
        <label>ZBTB16</label>
    </interactant>
    <organismsDiffer>false</organismsDiffer>
    <experiments>3</experiments>
</comment>
<comment type="interaction">
    <interactant intactId="EBI-11741437">
        <id>Q08117-2</id>
    </interactant>
    <interactant intactId="EBI-744471">
        <id>O43167</id>
        <label>ZBTB24</label>
    </interactant>
    <organismsDiffer>false</organismsDiffer>
    <experiments>3</experiments>
</comment>
<comment type="interaction">
    <interactant intactId="EBI-11741437">
        <id>Q08117-2</id>
    </interactant>
    <interactant intactId="EBI-7781767">
        <id>Q9UFB7</id>
        <label>ZBTB47</label>
    </interactant>
    <organismsDiffer>false</organismsDiffer>
    <experiments>5</experiments>
</comment>
<comment type="interaction">
    <interactant intactId="EBI-11741437">
        <id>Q08117-2</id>
    </interactant>
    <interactant intactId="EBI-10237226">
        <id>Q15911-2</id>
        <label>ZFHX3</label>
    </interactant>
    <organismsDiffer>false</organismsDiffer>
    <experiments>3</experiments>
</comment>
<comment type="interaction">
    <interactant intactId="EBI-11741437">
        <id>Q08117-2</id>
    </interactant>
    <interactant intactId="EBI-16428984">
        <id>A0A0S2Z6H0</id>
        <label>ZGPAT</label>
    </interactant>
    <organismsDiffer>false</organismsDiffer>
    <experiments>3</experiments>
</comment>
<comment type="interaction">
    <interactant intactId="EBI-11741437">
        <id>Q08117-2</id>
    </interactant>
    <interactant intactId="EBI-10183064">
        <id>Q8N5A5-2</id>
        <label>ZGPAT</label>
    </interactant>
    <organismsDiffer>false</organismsDiffer>
    <experiments>9</experiments>
</comment>
<comment type="interaction">
    <interactant intactId="EBI-11741437">
        <id>Q08117-2</id>
    </interactant>
    <interactant intactId="EBI-11963196">
        <id>Q15915</id>
        <label>ZIC1</label>
    </interactant>
    <organismsDiffer>false</organismsDiffer>
    <experiments>3</experiments>
</comment>
<comment type="interaction">
    <interactant intactId="EBI-11741437">
        <id>Q08117-2</id>
    </interactant>
    <interactant intactId="EBI-12030590">
        <id>Q9H0C1</id>
        <label>ZMYND12</label>
    </interactant>
    <organismsDiffer>false</organismsDiffer>
    <experiments>3</experiments>
</comment>
<comment type="interaction">
    <interactant intactId="EBI-11741437">
        <id>Q08117-2</id>
    </interactant>
    <interactant intactId="EBI-373456">
        <id>Q9Y3S2</id>
        <label>ZNF330</label>
    </interactant>
    <organismsDiffer>false</organismsDiffer>
    <experiments>5</experiments>
</comment>
<comment type="interaction">
    <interactant intactId="EBI-11741437">
        <id>Q08117-2</id>
    </interactant>
    <interactant intactId="EBI-20110775">
        <id>Q8NA42</id>
        <label>ZNF383</label>
    </interactant>
    <organismsDiffer>false</organismsDiffer>
    <experiments>3</experiments>
</comment>
<comment type="interaction">
    <interactant intactId="EBI-11741437">
        <id>Q08117-2</id>
    </interactant>
    <interactant intactId="EBI-347633">
        <id>Q9H9D4</id>
        <label>ZNF408</label>
    </interactant>
    <organismsDiffer>false</organismsDiffer>
    <experiments>3</experiments>
</comment>
<comment type="interaction">
    <interactant intactId="EBI-11741437">
        <id>Q08117-2</id>
    </interactant>
    <interactant intactId="EBI-744257">
        <id>Q96IQ9</id>
        <label>ZNF414</label>
    </interactant>
    <organismsDiffer>false</organismsDiffer>
    <experiments>5</experiments>
</comment>
<comment type="interaction">
    <interactant intactId="EBI-11741437">
        <id>Q08117-2</id>
    </interactant>
    <interactant intactId="EBI-740727">
        <id>Q8TAU3</id>
        <label>ZNF417</label>
    </interactant>
    <organismsDiffer>false</organismsDiffer>
    <experiments>3</experiments>
</comment>
<comment type="interaction">
    <interactant intactId="EBI-11741437">
        <id>Q08117-2</id>
    </interactant>
    <interactant intactId="EBI-11986485">
        <id>Q7Z7K2</id>
        <label>ZNF467</label>
    </interactant>
    <organismsDiffer>false</organismsDiffer>
    <experiments>3</experiments>
</comment>
<comment type="interaction">
    <interactant intactId="EBI-11741437">
        <id>Q08117-2</id>
    </interactant>
    <interactant intactId="EBI-12006434">
        <id>Q96MX3</id>
        <label>ZNF48</label>
    </interactant>
    <organismsDiffer>false</organismsDiffer>
    <experiments>3</experiments>
</comment>
<comment type="interaction">
    <interactant intactId="EBI-11741437">
        <id>Q08117-2</id>
    </interactant>
    <interactant intactId="EBI-8832437">
        <id>Q96F45</id>
        <label>ZNF503</label>
    </interactant>
    <organismsDiffer>false</organismsDiffer>
    <experiments>3</experiments>
</comment>
<comment type="interaction">
    <interactant intactId="EBI-11741437">
        <id>Q08117-2</id>
    </interactant>
    <interactant intactId="EBI-10283126">
        <id>Q96C55</id>
        <label>ZNF524</label>
    </interactant>
    <organismsDiffer>false</organismsDiffer>
    <experiments>3</experiments>
</comment>
<comment type="interaction">
    <interactant intactId="EBI-11741437">
        <id>Q08117-2</id>
    </interactant>
    <interactant intactId="EBI-4395732">
        <id>P0C7X2</id>
        <label>ZNF688</label>
    </interactant>
    <organismsDiffer>false</organismsDiffer>
    <experiments>3</experiments>
</comment>
<comment type="interaction">
    <interactant intactId="EBI-11741437">
        <id>Q08117-2</id>
    </interactant>
    <interactant intactId="EBI-10240849">
        <id>Q3KQV3</id>
        <label>ZNF792</label>
    </interactant>
    <organismsDiffer>false</organismsDiffer>
    <experiments>3</experiments>
</comment>
<comment type="interaction">
    <interactant intactId="EBI-11741437">
        <id>Q08117-2</id>
    </interactant>
    <interactant intactId="EBI-5667516">
        <id>Q9Y2P0</id>
        <label>ZNF835</label>
    </interactant>
    <organismsDiffer>false</organismsDiffer>
    <experiments>3</experiments>
</comment>
<comment type="interaction">
    <interactant intactId="EBI-11741437">
        <id>Q08117-2</id>
    </interactant>
    <interactant intactId="EBI-527853">
        <id>Q9UGI0</id>
        <label>ZRANB1</label>
    </interactant>
    <organismsDiffer>false</organismsDiffer>
    <experiments>3</experiments>
</comment>
<comment type="subcellular location">
    <subcellularLocation>
        <location evidence="1">Nucleus</location>
    </subcellularLocation>
</comment>
<comment type="alternative products">
    <event type="alternative splicing"/>
    <isoform>
        <id>Q08117-1</id>
        <name>1</name>
        <name>AES-1</name>
        <sequence type="displayed"/>
    </isoform>
    <isoform>
        <id>Q08117-2</id>
        <name>2</name>
        <name>AES-2</name>
        <sequence type="described" ref="VSP_043527"/>
    </isoform>
</comment>
<comment type="tissue specificity">
    <text>Found predominantly in muscle, heart and Placenta. In fetal tissues, abundantly expressed in the heart, lung, kidney, brain and liver.</text>
</comment>
<comment type="domain">
    <text>Lacks the C-terminal WD repeats.</text>
</comment>
<comment type="PTM">
    <text evidence="7">Ubiquitinated by XIAP/BIRC4.</text>
</comment>
<comment type="similarity">
    <text evidence="11">Belongs to the WD repeat Groucho/TLE family.</text>
</comment>
<comment type="sequence caution" evidence="11">
    <conflict type="erroneous initiation">
        <sequence resource="EMBL-CDS" id="AAC35517"/>
    </conflict>
    <text>Truncated N-terminus.</text>
</comment>
<gene>
    <name evidence="12" type="primary">TLE5</name>
    <name type="synonym">AES</name>
    <name type="synonym">GRG</name>
    <name type="synonym">GRG5</name>
</gene>
<dbReference type="EMBL" id="U04241">
    <property type="protein sequence ID" value="AAA16223.1"/>
    <property type="molecule type" value="mRNA"/>
</dbReference>
<dbReference type="EMBL" id="U88832">
    <property type="protein sequence ID" value="AAD00654.1"/>
    <property type="molecule type" value="Genomic_DNA"/>
</dbReference>
<dbReference type="EMBL" id="U88831">
    <property type="protein sequence ID" value="AAD00654.1"/>
    <property type="status" value="JOINED"/>
    <property type="molecule type" value="Genomic_DNA"/>
</dbReference>
<dbReference type="EMBL" id="AF072902">
    <property type="protein sequence ID" value="AAC35517.1"/>
    <property type="status" value="ALT_INIT"/>
    <property type="molecule type" value="mRNA"/>
</dbReference>
<dbReference type="EMBL" id="AK094591">
    <property type="protein sequence ID" value="BAG52894.1"/>
    <property type="molecule type" value="mRNA"/>
</dbReference>
<dbReference type="EMBL" id="AK314713">
    <property type="protein sequence ID" value="BAG37257.1"/>
    <property type="molecule type" value="mRNA"/>
</dbReference>
<dbReference type="EMBL" id="AC005944">
    <property type="protein sequence ID" value="AAC72103.1"/>
    <property type="molecule type" value="Genomic_DNA"/>
</dbReference>
<dbReference type="EMBL" id="CH471139">
    <property type="protein sequence ID" value="EAW69345.1"/>
    <property type="molecule type" value="Genomic_DNA"/>
</dbReference>
<dbReference type="EMBL" id="CH471139">
    <property type="protein sequence ID" value="EAW69347.1"/>
    <property type="molecule type" value="Genomic_DNA"/>
</dbReference>
<dbReference type="EMBL" id="BC113735">
    <property type="protein sequence ID" value="AAI13736.1"/>
    <property type="molecule type" value="mRNA"/>
</dbReference>
<dbReference type="EMBL" id="BC113737">
    <property type="protein sequence ID" value="AAI13738.1"/>
    <property type="molecule type" value="mRNA"/>
</dbReference>
<dbReference type="EMBL" id="X73358">
    <property type="protein sequence ID" value="CAA51768.1"/>
    <property type="molecule type" value="mRNA"/>
</dbReference>
<dbReference type="CCDS" id="CCDS12101.1">
    <molecule id="Q08117-2"/>
</dbReference>
<dbReference type="CCDS" id="CCDS12102.1">
    <molecule id="Q08117-1"/>
</dbReference>
<dbReference type="PIR" id="G01236">
    <property type="entry name" value="G01236"/>
</dbReference>
<dbReference type="PIR" id="S35678">
    <property type="entry name" value="S35678"/>
</dbReference>
<dbReference type="PIR" id="S35679">
    <property type="entry name" value="S35679"/>
</dbReference>
<dbReference type="RefSeq" id="NP_001121.2">
    <molecule id="Q08117-1"/>
    <property type="nucleotide sequence ID" value="NM_001130.5"/>
</dbReference>
<dbReference type="RefSeq" id="NP_945320.1">
    <molecule id="Q08117-2"/>
    <property type="nucleotide sequence ID" value="NM_198969.1"/>
</dbReference>
<dbReference type="RefSeq" id="NP_945321.1">
    <property type="nucleotide sequence ID" value="NM_198970.1"/>
</dbReference>
<dbReference type="SMR" id="Q08117"/>
<dbReference type="BioGRID" id="106675">
    <property type="interactions" value="441"/>
</dbReference>
<dbReference type="CORUM" id="Q08117"/>
<dbReference type="FunCoup" id="Q08117">
    <property type="interactions" value="1314"/>
</dbReference>
<dbReference type="IntAct" id="Q08117">
    <property type="interactions" value="441"/>
</dbReference>
<dbReference type="MINT" id="Q08117"/>
<dbReference type="STRING" id="9606.ENSP00000221561"/>
<dbReference type="MoonDB" id="Q08117">
    <property type="type" value="Predicted"/>
</dbReference>
<dbReference type="GlyCosmos" id="Q08117">
    <property type="glycosylation" value="7 sites, 2 glycans"/>
</dbReference>
<dbReference type="GlyGen" id="Q08117">
    <property type="glycosylation" value="7 sites, 2 O-linked glycans (7 sites)"/>
</dbReference>
<dbReference type="iPTMnet" id="Q08117"/>
<dbReference type="PhosphoSitePlus" id="Q08117"/>
<dbReference type="BioMuta" id="AES"/>
<dbReference type="DMDM" id="23503062"/>
<dbReference type="jPOST" id="Q08117"/>
<dbReference type="MassIVE" id="Q08117"/>
<dbReference type="PaxDb" id="9606-ENSP00000221561"/>
<dbReference type="PeptideAtlas" id="Q08117"/>
<dbReference type="ProteomicsDB" id="58572">
    <molecule id="Q08117-1"/>
</dbReference>
<dbReference type="ProteomicsDB" id="58573">
    <molecule id="Q08117-2"/>
</dbReference>
<dbReference type="Pumba" id="Q08117"/>
<dbReference type="Antibodypedia" id="10920">
    <property type="antibodies" value="393 antibodies from 35 providers"/>
</dbReference>
<dbReference type="DNASU" id="166"/>
<dbReference type="Ensembl" id="ENST00000221561.12">
    <molecule id="Q08117-2"/>
    <property type="protein sequence ID" value="ENSP00000221561.7"/>
    <property type="gene ID" value="ENSG00000104964.15"/>
</dbReference>
<dbReference type="Ensembl" id="ENST00000327141.9">
    <molecule id="Q08117-1"/>
    <property type="protein sequence ID" value="ENSP00000317537.4"/>
    <property type="gene ID" value="ENSG00000104964.15"/>
</dbReference>
<dbReference type="GeneID" id="166"/>
<dbReference type="KEGG" id="hsa:166"/>
<dbReference type="MANE-Select" id="ENST00000327141.9">
    <property type="protein sequence ID" value="ENSP00000317537.4"/>
    <property type="RefSeq nucleotide sequence ID" value="NM_001130.6"/>
    <property type="RefSeq protein sequence ID" value="NP_001121.2"/>
</dbReference>
<dbReference type="UCSC" id="uc002lwy.2">
    <molecule id="Q08117-1"/>
    <property type="organism name" value="human"/>
</dbReference>
<dbReference type="AGR" id="HGNC:307"/>
<dbReference type="CTD" id="166"/>
<dbReference type="DisGeNET" id="166"/>
<dbReference type="GeneCards" id="TLE5"/>
<dbReference type="HGNC" id="HGNC:307">
    <property type="gene designation" value="TLE5"/>
</dbReference>
<dbReference type="HPA" id="ENSG00000104964">
    <property type="expression patterns" value="Low tissue specificity"/>
</dbReference>
<dbReference type="MIM" id="600188">
    <property type="type" value="gene"/>
</dbReference>
<dbReference type="neXtProt" id="NX_Q08117"/>
<dbReference type="OpenTargets" id="ENSG00000104964"/>
<dbReference type="PharmGKB" id="PA24606"/>
<dbReference type="VEuPathDB" id="HostDB:ENSG00000104964"/>
<dbReference type="eggNOG" id="KOG0639">
    <property type="taxonomic scope" value="Eukaryota"/>
</dbReference>
<dbReference type="GeneTree" id="ENSGT01030000234519"/>
<dbReference type="HOGENOM" id="CLU_092092_0_0_1"/>
<dbReference type="InParanoid" id="Q08117"/>
<dbReference type="OMA" id="GHGMEAR"/>
<dbReference type="OrthoDB" id="8949191at2759"/>
<dbReference type="PAN-GO" id="Q08117">
    <property type="GO annotations" value="4 GO annotations based on evolutionary models"/>
</dbReference>
<dbReference type="PhylomeDB" id="Q08117"/>
<dbReference type="PathwayCommons" id="Q08117"/>
<dbReference type="Reactome" id="R-HSA-4641265">
    <property type="pathway name" value="Repression of WNT target genes"/>
</dbReference>
<dbReference type="SignaLink" id="Q08117"/>
<dbReference type="SIGNOR" id="Q08117"/>
<dbReference type="BioGRID-ORCS" id="166">
    <property type="hits" value="10 hits in 1166 CRISPR screens"/>
</dbReference>
<dbReference type="ChiTaRS" id="AES">
    <property type="organism name" value="human"/>
</dbReference>
<dbReference type="GenomeRNAi" id="166"/>
<dbReference type="Pharos" id="Q08117">
    <property type="development level" value="Tbio"/>
</dbReference>
<dbReference type="PRO" id="PR:Q08117"/>
<dbReference type="Proteomes" id="UP000005640">
    <property type="component" value="Chromosome 19"/>
</dbReference>
<dbReference type="RNAct" id="Q08117">
    <property type="molecule type" value="protein"/>
</dbReference>
<dbReference type="Bgee" id="ENSG00000104964">
    <property type="expression patterns" value="Expressed in right hemisphere of cerebellum and 199 other cell types or tissues"/>
</dbReference>
<dbReference type="ExpressionAtlas" id="Q08117">
    <property type="expression patterns" value="baseline and differential"/>
</dbReference>
<dbReference type="GO" id="GO:0005634">
    <property type="term" value="C:nucleus"/>
    <property type="evidence" value="ECO:0000314"/>
    <property type="project" value="UniProtKB"/>
</dbReference>
<dbReference type="GO" id="GO:0042802">
    <property type="term" value="F:identical protein binding"/>
    <property type="evidence" value="ECO:0000353"/>
    <property type="project" value="IntAct"/>
</dbReference>
<dbReference type="GO" id="GO:0003714">
    <property type="term" value="F:transcription corepressor activity"/>
    <property type="evidence" value="ECO:0000314"/>
    <property type="project" value="UniProtKB"/>
</dbReference>
<dbReference type="GO" id="GO:0090090">
    <property type="term" value="P:negative regulation of canonical Wnt signaling pathway"/>
    <property type="evidence" value="ECO:0000314"/>
    <property type="project" value="UniProtKB"/>
</dbReference>
<dbReference type="GO" id="GO:0045892">
    <property type="term" value="P:negative regulation of DNA-templated transcription"/>
    <property type="evidence" value="ECO:0000314"/>
    <property type="project" value="UniProtKB"/>
</dbReference>
<dbReference type="GO" id="GO:0010629">
    <property type="term" value="P:negative regulation of gene expression"/>
    <property type="evidence" value="ECO:0000315"/>
    <property type="project" value="UniProtKB"/>
</dbReference>
<dbReference type="GO" id="GO:0032091">
    <property type="term" value="P:negative regulation of protein binding"/>
    <property type="evidence" value="ECO:0000314"/>
    <property type="project" value="BHF-UCL"/>
</dbReference>
<dbReference type="GO" id="GO:0060761">
    <property type="term" value="P:negative regulation of response to cytokine stimulus"/>
    <property type="evidence" value="ECO:0000315"/>
    <property type="project" value="BHF-UCL"/>
</dbReference>
<dbReference type="GO" id="GO:0000122">
    <property type="term" value="P:negative regulation of transcription by RNA polymerase II"/>
    <property type="evidence" value="ECO:0000315"/>
    <property type="project" value="BHF-UCL"/>
</dbReference>
<dbReference type="GO" id="GO:2000210">
    <property type="term" value="P:positive regulation of anoikis"/>
    <property type="evidence" value="ECO:0000315"/>
    <property type="project" value="UniProtKB"/>
</dbReference>
<dbReference type="GO" id="GO:0040008">
    <property type="term" value="P:regulation of growth"/>
    <property type="evidence" value="ECO:0007669"/>
    <property type="project" value="Ensembl"/>
</dbReference>
<dbReference type="GO" id="GO:0070555">
    <property type="term" value="P:response to interleukin-1"/>
    <property type="evidence" value="ECO:0000314"/>
    <property type="project" value="BHF-UCL"/>
</dbReference>
<dbReference type="GO" id="GO:0001501">
    <property type="term" value="P:skeletal system development"/>
    <property type="evidence" value="ECO:0007669"/>
    <property type="project" value="Ensembl"/>
</dbReference>
<dbReference type="GO" id="GO:0016055">
    <property type="term" value="P:Wnt signaling pathway"/>
    <property type="evidence" value="ECO:0007669"/>
    <property type="project" value="UniProtKB-KW"/>
</dbReference>
<dbReference type="InterPro" id="IPR005617">
    <property type="entry name" value="Groucho/TLE_N"/>
</dbReference>
<dbReference type="InterPro" id="IPR009146">
    <property type="entry name" value="Groucho_enhance"/>
</dbReference>
<dbReference type="PANTHER" id="PTHR10814">
    <property type="entry name" value="TRANSDUCIN-LIKE ENHANCER PROTEIN"/>
    <property type="match status" value="1"/>
</dbReference>
<dbReference type="PANTHER" id="PTHR10814:SF31">
    <property type="entry name" value="TRANSDUCIN-LIKE ENHANCER PROTEIN 4"/>
    <property type="match status" value="1"/>
</dbReference>
<dbReference type="Pfam" id="PF03920">
    <property type="entry name" value="TLE_N"/>
    <property type="match status" value="1"/>
</dbReference>
<feature type="chain" id="PRO_0000050834" description="TLE family member 5">
    <location>
        <begin position="1"/>
        <end position="197"/>
    </location>
</feature>
<feature type="region of interest" description="CCN domain">
    <location>
        <begin position="166"/>
        <end position="197"/>
    </location>
</feature>
<feature type="region of interest" description="Disordered" evidence="2">
    <location>
        <begin position="174"/>
        <end position="197"/>
    </location>
</feature>
<feature type="compositionally biased region" description="Basic and acidic residues" evidence="2">
    <location>
        <begin position="175"/>
        <end position="197"/>
    </location>
</feature>
<feature type="modified residue" description="Phosphoserine" evidence="13">
    <location>
        <position position="196"/>
    </location>
</feature>
<feature type="splice variant" id="VSP_043527" description="In isoform 2." evidence="8 9 10">
    <original>MMFPQSRHS</original>
    <variation>MCHKNGFPQEGGITAAFLQKRKLRLSKNHRPARAKVTEHVRGTRPGRATAGPAASTRAAGSLFFDRWGNRGPAGCR</variation>
    <location>
        <begin position="1"/>
        <end position="9"/>
    </location>
</feature>
<feature type="sequence variant" id="VAR_011958" description="In dbSNP:rs1802578.">
    <original>A</original>
    <variation>E</variation>
    <location>
        <position position="168"/>
    </location>
</feature>
<feature type="sequence conflict" description="In Ref. 2 and 5." evidence="11" ref="2 5">
    <original>K</original>
    <variation>T</variation>
    <location>
        <position position="30"/>
    </location>
</feature>
<proteinExistence type="evidence at protein level"/>
<organism>
    <name type="scientific">Homo sapiens</name>
    <name type="common">Human</name>
    <dbReference type="NCBI Taxonomy" id="9606"/>
    <lineage>
        <taxon>Eukaryota</taxon>
        <taxon>Metazoa</taxon>
        <taxon>Chordata</taxon>
        <taxon>Craniata</taxon>
        <taxon>Vertebrata</taxon>
        <taxon>Euteleostomi</taxon>
        <taxon>Mammalia</taxon>
        <taxon>Eutheria</taxon>
        <taxon>Euarchontoglires</taxon>
        <taxon>Primates</taxon>
        <taxon>Haplorrhini</taxon>
        <taxon>Catarrhini</taxon>
        <taxon>Hominidae</taxon>
        <taxon>Homo</taxon>
    </lineage>
</organism>
<protein>
    <recommendedName>
        <fullName evidence="11">TLE family member 5</fullName>
    </recommendedName>
    <alternativeName>
        <fullName>Amino-terminal enhancer of split</fullName>
        <shortName>Amino enhancer of split</shortName>
    </alternativeName>
    <alternativeName>
        <fullName>Gp130-associated protein GAM</fullName>
    </alternativeName>
    <alternativeName>
        <fullName>Grg-5</fullName>
    </alternativeName>
    <alternativeName>
        <fullName>Groucho-related protein 5</fullName>
    </alternativeName>
    <alternativeName>
        <fullName>Protein ESP1</fullName>
    </alternativeName>
    <alternativeName>
        <fullName>Protein GRG</fullName>
    </alternativeName>
    <alternativeName>
        <fullName evidence="11">TLE family member 5, transcriptional modulator</fullName>
    </alternativeName>
</protein>
<accession>Q08117</accession>
<accession>B2RBL0</accession>
<accession>Q12808</accession>
<accession>Q14CJ1</accession>
<accession>Q96TG9</accession>
<accession>Q9UDY9</accession>
<evidence type="ECO:0000250" key="1"/>
<evidence type="ECO:0000256" key="2">
    <source>
        <dbReference type="SAM" id="MobiDB-lite"/>
    </source>
</evidence>
<evidence type="ECO:0000269" key="3">
    <source>
    </source>
</evidence>
<evidence type="ECO:0000269" key="4">
    <source>
    </source>
</evidence>
<evidence type="ECO:0000269" key="5">
    <source>
    </source>
</evidence>
<evidence type="ECO:0000269" key="6">
    <source>
    </source>
</evidence>
<evidence type="ECO:0000269" key="7">
    <source>
    </source>
</evidence>
<evidence type="ECO:0000303" key="8">
    <source>
    </source>
</evidence>
<evidence type="ECO:0000303" key="9">
    <source>
    </source>
</evidence>
<evidence type="ECO:0000303" key="10">
    <source>
    </source>
</evidence>
<evidence type="ECO:0000305" key="11"/>
<evidence type="ECO:0000312" key="12">
    <source>
        <dbReference type="HGNC" id="HGNC:307"/>
    </source>
</evidence>
<evidence type="ECO:0007744" key="13">
    <source>
    </source>
</evidence>
<reference key="1">
    <citation type="submission" date="1993-12" db="EMBL/GenBank/DDBJ databases">
        <title>Molecular cloning, sequence analysis and characterization of a human homolog of Drosophila enhancer of split m9/m10.</title>
        <authorList>
            <person name="Scala L.A."/>
            <person name="Piparo K.E."/>
            <person name="Tirumalai P.S."/>
            <person name="Howells R.D."/>
        </authorList>
    </citation>
    <scope>NUCLEOTIDE SEQUENCE [MRNA] (ISOFORM 1)</scope>
    <source>
        <tissue>Neuroblastoma</tissue>
    </source>
</reference>
<reference key="2">
    <citation type="journal article" date="1998" name="DNA Cell Biol.">
        <title>Genomic organization and chromosome localization to band 19p13.3 of the human AES gene: gene product exhibits strong similarity to the N-terminal domain of Drosophila enhancer of split Groucho protein.</title>
        <authorList>
            <person name="Hou E.W."/>
            <person name="Li S.S.-L."/>
        </authorList>
    </citation>
    <scope>NUCLEOTIDE SEQUENCE [GENOMIC DNA]</scope>
    <source>
        <tissue>Lymphocyte</tissue>
        <tissue>Umbilical cord</tissue>
    </source>
</reference>
<reference key="3">
    <citation type="journal article" date="1998" name="Zhonghua Wei Sheng Wu Xue He Mian Yi Xue Za Zhi">
        <title>Cloning and eukaryotic expressing of a novel gp130 associated molecule.</title>
        <authorList>
            <person name="Liu Y."/>
            <person name="Jin B.Q."/>
            <person name="Liu F."/>
        </authorList>
    </citation>
    <scope>NUCLEOTIDE SEQUENCE [MRNA] (ISOFORM 1)</scope>
    <source>
        <tissue>Placenta</tissue>
    </source>
</reference>
<reference key="4">
    <citation type="journal article" date="2004" name="Nat. Genet.">
        <title>Complete sequencing and characterization of 21,243 full-length human cDNAs.</title>
        <authorList>
            <person name="Ota T."/>
            <person name="Suzuki Y."/>
            <person name="Nishikawa T."/>
            <person name="Otsuki T."/>
            <person name="Sugiyama T."/>
            <person name="Irie R."/>
            <person name="Wakamatsu A."/>
            <person name="Hayashi K."/>
            <person name="Sato H."/>
            <person name="Nagai K."/>
            <person name="Kimura K."/>
            <person name="Makita H."/>
            <person name="Sekine M."/>
            <person name="Obayashi M."/>
            <person name="Nishi T."/>
            <person name="Shibahara T."/>
            <person name="Tanaka T."/>
            <person name="Ishii S."/>
            <person name="Yamamoto J."/>
            <person name="Saito K."/>
            <person name="Kawai Y."/>
            <person name="Isono Y."/>
            <person name="Nakamura Y."/>
            <person name="Nagahari K."/>
            <person name="Murakami K."/>
            <person name="Yasuda T."/>
            <person name="Iwayanagi T."/>
            <person name="Wagatsuma M."/>
            <person name="Shiratori A."/>
            <person name="Sudo H."/>
            <person name="Hosoiri T."/>
            <person name="Kaku Y."/>
            <person name="Kodaira H."/>
            <person name="Kondo H."/>
            <person name="Sugawara M."/>
            <person name="Takahashi M."/>
            <person name="Kanda K."/>
            <person name="Yokoi T."/>
            <person name="Furuya T."/>
            <person name="Kikkawa E."/>
            <person name="Omura Y."/>
            <person name="Abe K."/>
            <person name="Kamihara K."/>
            <person name="Katsuta N."/>
            <person name="Sato K."/>
            <person name="Tanikawa M."/>
            <person name="Yamazaki M."/>
            <person name="Ninomiya K."/>
            <person name="Ishibashi T."/>
            <person name="Yamashita H."/>
            <person name="Murakawa K."/>
            <person name="Fujimori K."/>
            <person name="Tanai H."/>
            <person name="Kimata M."/>
            <person name="Watanabe M."/>
            <person name="Hiraoka S."/>
            <person name="Chiba Y."/>
            <person name="Ishida S."/>
            <person name="Ono Y."/>
            <person name="Takiguchi S."/>
            <person name="Watanabe S."/>
            <person name="Yosida M."/>
            <person name="Hotuta T."/>
            <person name="Kusano J."/>
            <person name="Kanehori K."/>
            <person name="Takahashi-Fujii A."/>
            <person name="Hara H."/>
            <person name="Tanase T.-O."/>
            <person name="Nomura Y."/>
            <person name="Togiya S."/>
            <person name="Komai F."/>
            <person name="Hara R."/>
            <person name="Takeuchi K."/>
            <person name="Arita M."/>
            <person name="Imose N."/>
            <person name="Musashino K."/>
            <person name="Yuuki H."/>
            <person name="Oshima A."/>
            <person name="Sasaki N."/>
            <person name="Aotsuka S."/>
            <person name="Yoshikawa Y."/>
            <person name="Matsunawa H."/>
            <person name="Ichihara T."/>
            <person name="Shiohata N."/>
            <person name="Sano S."/>
            <person name="Moriya S."/>
            <person name="Momiyama H."/>
            <person name="Satoh N."/>
            <person name="Takami S."/>
            <person name="Terashima Y."/>
            <person name="Suzuki O."/>
            <person name="Nakagawa S."/>
            <person name="Senoh A."/>
            <person name="Mizoguchi H."/>
            <person name="Goto Y."/>
            <person name="Shimizu F."/>
            <person name="Wakebe H."/>
            <person name="Hishigaki H."/>
            <person name="Watanabe T."/>
            <person name="Sugiyama A."/>
            <person name="Takemoto M."/>
            <person name="Kawakami B."/>
            <person name="Yamazaki M."/>
            <person name="Watanabe K."/>
            <person name="Kumagai A."/>
            <person name="Itakura S."/>
            <person name="Fukuzumi Y."/>
            <person name="Fujimori Y."/>
            <person name="Komiyama M."/>
            <person name="Tashiro H."/>
            <person name="Tanigami A."/>
            <person name="Fujiwara T."/>
            <person name="Ono T."/>
            <person name="Yamada K."/>
            <person name="Fujii Y."/>
            <person name="Ozaki K."/>
            <person name="Hirao M."/>
            <person name="Ohmori Y."/>
            <person name="Kawabata A."/>
            <person name="Hikiji T."/>
            <person name="Kobatake N."/>
            <person name="Inagaki H."/>
            <person name="Ikema Y."/>
            <person name="Okamoto S."/>
            <person name="Okitani R."/>
            <person name="Kawakami T."/>
            <person name="Noguchi S."/>
            <person name="Itoh T."/>
            <person name="Shigeta K."/>
            <person name="Senba T."/>
            <person name="Matsumura K."/>
            <person name="Nakajima Y."/>
            <person name="Mizuno T."/>
            <person name="Morinaga M."/>
            <person name="Sasaki M."/>
            <person name="Togashi T."/>
            <person name="Oyama M."/>
            <person name="Hata H."/>
            <person name="Watanabe M."/>
            <person name="Komatsu T."/>
            <person name="Mizushima-Sugano J."/>
            <person name="Satoh T."/>
            <person name="Shirai Y."/>
            <person name="Takahashi Y."/>
            <person name="Nakagawa K."/>
            <person name="Okumura K."/>
            <person name="Nagase T."/>
            <person name="Nomura N."/>
            <person name="Kikuchi H."/>
            <person name="Masuho Y."/>
            <person name="Yamashita R."/>
            <person name="Nakai K."/>
            <person name="Yada T."/>
            <person name="Nakamura Y."/>
            <person name="Ohara O."/>
            <person name="Isogai T."/>
            <person name="Sugano S."/>
        </authorList>
    </citation>
    <scope>NUCLEOTIDE SEQUENCE [LARGE SCALE MRNA] (ISOFORMS 1 AND 2)</scope>
    <source>
        <tissue>Amygdala</tissue>
        <tissue>Cerebellum</tissue>
    </source>
</reference>
<reference key="5">
    <citation type="journal article" date="2004" name="Nature">
        <title>The DNA sequence and biology of human chromosome 19.</title>
        <authorList>
            <person name="Grimwood J."/>
            <person name="Gordon L.A."/>
            <person name="Olsen A.S."/>
            <person name="Terry A."/>
            <person name="Schmutz J."/>
            <person name="Lamerdin J.E."/>
            <person name="Hellsten U."/>
            <person name="Goodstein D."/>
            <person name="Couronne O."/>
            <person name="Tran-Gyamfi M."/>
            <person name="Aerts A."/>
            <person name="Altherr M."/>
            <person name="Ashworth L."/>
            <person name="Bajorek E."/>
            <person name="Black S."/>
            <person name="Branscomb E."/>
            <person name="Caenepeel S."/>
            <person name="Carrano A.V."/>
            <person name="Caoile C."/>
            <person name="Chan Y.M."/>
            <person name="Christensen M."/>
            <person name="Cleland C.A."/>
            <person name="Copeland A."/>
            <person name="Dalin E."/>
            <person name="Dehal P."/>
            <person name="Denys M."/>
            <person name="Detter J.C."/>
            <person name="Escobar J."/>
            <person name="Flowers D."/>
            <person name="Fotopulos D."/>
            <person name="Garcia C."/>
            <person name="Georgescu A.M."/>
            <person name="Glavina T."/>
            <person name="Gomez M."/>
            <person name="Gonzales E."/>
            <person name="Groza M."/>
            <person name="Hammon N."/>
            <person name="Hawkins T."/>
            <person name="Haydu L."/>
            <person name="Ho I."/>
            <person name="Huang W."/>
            <person name="Israni S."/>
            <person name="Jett J."/>
            <person name="Kadner K."/>
            <person name="Kimball H."/>
            <person name="Kobayashi A."/>
            <person name="Larionov V."/>
            <person name="Leem S.-H."/>
            <person name="Lopez F."/>
            <person name="Lou Y."/>
            <person name="Lowry S."/>
            <person name="Malfatti S."/>
            <person name="Martinez D."/>
            <person name="McCready P.M."/>
            <person name="Medina C."/>
            <person name="Morgan J."/>
            <person name="Nelson K."/>
            <person name="Nolan M."/>
            <person name="Ovcharenko I."/>
            <person name="Pitluck S."/>
            <person name="Pollard M."/>
            <person name="Popkie A.P."/>
            <person name="Predki P."/>
            <person name="Quan G."/>
            <person name="Ramirez L."/>
            <person name="Rash S."/>
            <person name="Retterer J."/>
            <person name="Rodriguez A."/>
            <person name="Rogers S."/>
            <person name="Salamov A."/>
            <person name="Salazar A."/>
            <person name="She X."/>
            <person name="Smith D."/>
            <person name="Slezak T."/>
            <person name="Solovyev V."/>
            <person name="Thayer N."/>
            <person name="Tice H."/>
            <person name="Tsai M."/>
            <person name="Ustaszewska A."/>
            <person name="Vo N."/>
            <person name="Wagner M."/>
            <person name="Wheeler J."/>
            <person name="Wu K."/>
            <person name="Xie G."/>
            <person name="Yang J."/>
            <person name="Dubchak I."/>
            <person name="Furey T.S."/>
            <person name="DeJong P."/>
            <person name="Dickson M."/>
            <person name="Gordon D."/>
            <person name="Eichler E.E."/>
            <person name="Pennacchio L.A."/>
            <person name="Richardson P."/>
            <person name="Stubbs L."/>
            <person name="Rokhsar D.S."/>
            <person name="Myers R.M."/>
            <person name="Rubin E.M."/>
            <person name="Lucas S.M."/>
        </authorList>
    </citation>
    <scope>NUCLEOTIDE SEQUENCE [LARGE SCALE GENOMIC DNA]</scope>
</reference>
<reference key="6">
    <citation type="submission" date="2005-09" db="EMBL/GenBank/DDBJ databases">
        <authorList>
            <person name="Mural R.J."/>
            <person name="Istrail S."/>
            <person name="Sutton G.G."/>
            <person name="Florea L."/>
            <person name="Halpern A.L."/>
            <person name="Mobarry C.M."/>
            <person name="Lippert R."/>
            <person name="Walenz B."/>
            <person name="Shatkay H."/>
            <person name="Dew I."/>
            <person name="Miller J.R."/>
            <person name="Flanigan M.J."/>
            <person name="Edwards N.J."/>
            <person name="Bolanos R."/>
            <person name="Fasulo D."/>
            <person name="Halldorsson B.V."/>
            <person name="Hannenhalli S."/>
            <person name="Turner R."/>
            <person name="Yooseph S."/>
            <person name="Lu F."/>
            <person name="Nusskern D.R."/>
            <person name="Shue B.C."/>
            <person name="Zheng X.H."/>
            <person name="Zhong F."/>
            <person name="Delcher A.L."/>
            <person name="Huson D.H."/>
            <person name="Kravitz S.A."/>
            <person name="Mouchard L."/>
            <person name="Reinert K."/>
            <person name="Remington K.A."/>
            <person name="Clark A.G."/>
            <person name="Waterman M.S."/>
            <person name="Eichler E.E."/>
            <person name="Adams M.D."/>
            <person name="Hunkapiller M.W."/>
            <person name="Myers E.W."/>
            <person name="Venter J.C."/>
        </authorList>
    </citation>
    <scope>NUCLEOTIDE SEQUENCE [LARGE SCALE GENOMIC DNA]</scope>
</reference>
<reference key="7">
    <citation type="journal article" date="2004" name="Genome Res.">
        <title>The status, quality, and expansion of the NIH full-length cDNA project: the Mammalian Gene Collection (MGC).</title>
        <authorList>
            <consortium name="The MGC Project Team"/>
        </authorList>
    </citation>
    <scope>NUCLEOTIDE SEQUENCE [LARGE SCALE MRNA] (ISOFORM 2)</scope>
    <source>
        <tissue>Brain</tissue>
    </source>
</reference>
<reference key="8">
    <citation type="journal article" date="1993" name="Eur. J. Biochem.">
        <title>Molecular cloning and expression of mouse and human cDNA encoding AES and ESG proteins with strong similarity to Drosophila enhancer of split groucho protein.</title>
        <authorList>
            <person name="Miyasaka H."/>
            <person name="Choudhury B.K."/>
            <person name="Hou E.W."/>
            <person name="Li S.S.-L."/>
        </authorList>
    </citation>
    <scope>NUCLEOTIDE SEQUENCE [MRNA] OF 13-197 (ISOFORMS 1 AND 2)</scope>
    <source>
        <tissue>Testis</tissue>
    </source>
</reference>
<reference key="9">
    <citation type="journal article" date="2000" name="J. Biol. Chem.">
        <title>Inhibition of nuclear factor-kappaB-mediated transcription by association with the amino-terminal enhancer of split, a Groucho-related protein lacking WD40 repeats.</title>
        <authorList>
            <person name="Tetsuka T."/>
            <person name="Uranishi H."/>
            <person name="Imai H."/>
            <person name="Ono T."/>
            <person name="Sonta S."/>
            <person name="Takahashi N."/>
            <person name="Asamitsu K."/>
            <person name="Okamoto T."/>
        </authorList>
    </citation>
    <scope>FUNCTION</scope>
    <scope>INTERACTION WITH RELA</scope>
</reference>
<reference key="10">
    <citation type="journal article" date="2000" name="J. Biol. Chem.">
        <title>Transducin-like enhancer of split proteins, the human homologs of Drosophila groucho, interact with hepatic nuclear factor 3beta.</title>
        <authorList>
            <person name="Wang J.-C."/>
            <person name="Waltner-Law M."/>
            <person name="Yamada K."/>
            <person name="Osawa H."/>
            <person name="Stifani S."/>
            <person name="Granner D.K."/>
        </authorList>
    </citation>
    <scope>FUNCTION</scope>
    <scope>OLIGOMERIZATION</scope>
</reference>
<reference key="11">
    <citation type="journal article" date="2001" name="Mol. Cell. Biol.">
        <title>Pf1, a novel PHD zinc finger protein that links the TLE corepressor to the mSin3A-histone deacetylase complex.</title>
        <authorList>
            <person name="Yochum G.S."/>
            <person name="Ayer D.E."/>
        </authorList>
    </citation>
    <scope>INTERACTION WITH PHF12</scope>
</reference>
<reference key="12">
    <citation type="journal article" date="2003" name="Development">
        <title>Six3 and Six6 activity is modulated by members of the groucho family.</title>
        <authorList>
            <person name="Lopez-Rios J."/>
            <person name="Tessmar K."/>
            <person name="Loosli F."/>
            <person name="Wittbrodt J."/>
            <person name="Bovolenta P."/>
        </authorList>
    </citation>
    <scope>INTERACTION WITH SIX3</scope>
</reference>
<reference key="13">
    <citation type="journal article" date="2010" name="Sci. Signal.">
        <title>Quantitative phosphoproteomics reveals widespread full phosphorylation site occupancy during mitosis.</title>
        <authorList>
            <person name="Olsen J.V."/>
            <person name="Vermeulen M."/>
            <person name="Santamaria A."/>
            <person name="Kumar C."/>
            <person name="Miller M.L."/>
            <person name="Jensen L.J."/>
            <person name="Gnad F."/>
            <person name="Cox J."/>
            <person name="Jensen T.S."/>
            <person name="Nigg E.A."/>
            <person name="Brunak S."/>
            <person name="Mann M."/>
        </authorList>
    </citation>
    <scope>PHOSPHORYLATION [LARGE SCALE ANALYSIS] AT SER-196</scope>
    <scope>IDENTIFICATION BY MASS SPECTROMETRY [LARGE SCALE ANALYSIS]</scope>
    <source>
        <tissue>Cervix carcinoma</tissue>
    </source>
</reference>
<reference key="14">
    <citation type="journal article" date="2012" name="Mol. Cell">
        <title>XIAP monoubiquitylates Groucho/TLE to promote canonical Wnt signaling.</title>
        <authorList>
            <person name="Hanson A.J."/>
            <person name="Wallace H.A."/>
            <person name="Freeman T.J."/>
            <person name="Beauchamp R.D."/>
            <person name="Lee L.A."/>
            <person name="Lee E."/>
        </authorList>
    </citation>
    <scope>UBIQUITINATION BY XIAP/BIRC4</scope>
</reference>
<name>TLE5_HUMAN</name>
<sequence>MMFPQSRHSGSSHLPQQLKFTTSDSCDRIKDEFQLLQAQYHSLKLECDKLASEKSEMQRHYVMYYEMSYGLNIEMHKQAEIVKRLNGICAQVLPYLSQEHQQQVLGAIERAKQVTAPELNSIIRQQLQAHQLSQLQALALPLTPLPVGLQPPSLPAVSAGTGLLSLSALGSQAHLSKEDKNGHDGDTHQEDDGEKSD</sequence>
<keyword id="KW-0025">Alternative splicing</keyword>
<keyword id="KW-0539">Nucleus</keyword>
<keyword id="KW-0597">Phosphoprotein</keyword>
<keyword id="KW-1267">Proteomics identification</keyword>
<keyword id="KW-1185">Reference proteome</keyword>
<keyword id="KW-0678">Repressor</keyword>
<keyword id="KW-0804">Transcription</keyword>
<keyword id="KW-0805">Transcription regulation</keyword>
<keyword id="KW-0832">Ubl conjugation</keyword>
<keyword id="KW-0879">Wnt signaling pathway</keyword>